<keyword id="KW-0002">3D-structure</keyword>
<keyword id="KW-0025">Alternative splicing</keyword>
<keyword id="KW-0256">Endoplasmic reticulum</keyword>
<keyword id="KW-0349">Heme</keyword>
<keyword id="KW-0408">Iron</keyword>
<keyword id="KW-0443">Lipid metabolism</keyword>
<keyword id="KW-0472">Membrane</keyword>
<keyword id="KW-0479">Metal-binding</keyword>
<keyword id="KW-0492">Microsome</keyword>
<keyword id="KW-0503">Monooxygenase</keyword>
<keyword id="KW-0560">Oxidoreductase</keyword>
<keyword id="KW-1267">Proteomics identification</keyword>
<keyword id="KW-1185">Reference proteome</keyword>
<keyword id="KW-0753">Steroid metabolism</keyword>
<gene>
    <name evidence="14 21" type="primary">CYP3A5</name>
</gene>
<dbReference type="EC" id="1.14.14.1" evidence="3 5 8"/>
<dbReference type="EMBL" id="J04813">
    <property type="protein sequence ID" value="AAA02993.1"/>
    <property type="molecule type" value="mRNA"/>
</dbReference>
<dbReference type="EMBL" id="AK299002">
    <property type="protein sequence ID" value="BAH12923.1"/>
    <property type="molecule type" value="mRNA"/>
</dbReference>
<dbReference type="EMBL" id="AC005020">
    <property type="protein sequence ID" value="AAS02016.1"/>
    <property type="molecule type" value="Genomic_DNA"/>
</dbReference>
<dbReference type="EMBL" id="CH236956">
    <property type="protein sequence ID" value="EAL23868.1"/>
    <property type="molecule type" value="Genomic_DNA"/>
</dbReference>
<dbReference type="EMBL" id="CH471091">
    <property type="protein sequence ID" value="EAW76638.1"/>
    <property type="molecule type" value="Genomic_DNA"/>
</dbReference>
<dbReference type="EMBL" id="CH471091">
    <property type="protein sequence ID" value="EAW76642.1"/>
    <property type="molecule type" value="Genomic_DNA"/>
</dbReference>
<dbReference type="EMBL" id="BC033862">
    <property type="protein sequence ID" value="AAH33862.1"/>
    <property type="molecule type" value="mRNA"/>
</dbReference>
<dbReference type="EMBL" id="AF280107">
    <property type="protein sequence ID" value="AAG32288.1"/>
    <property type="molecule type" value="Genomic_DNA"/>
</dbReference>
<dbReference type="EMBL" id="L35912">
    <property type="protein sequence ID" value="AAB00083.1"/>
    <property type="molecule type" value="Genomic_DNA"/>
</dbReference>
<dbReference type="EMBL" id="S74699">
    <property type="protein sequence ID" value="AAD14157.1"/>
    <property type="molecule type" value="Genomic_DNA"/>
</dbReference>
<dbReference type="EMBL" id="S74700">
    <property type="protein sequence ID" value="AAD14158.1"/>
    <property type="molecule type" value="Genomic_DNA"/>
</dbReference>
<dbReference type="CCDS" id="CCDS55134.1">
    <molecule id="P20815-2"/>
</dbReference>
<dbReference type="CCDS" id="CCDS5672.1">
    <molecule id="P20815-1"/>
</dbReference>
<dbReference type="PIR" id="A34101">
    <property type="entry name" value="A34101"/>
</dbReference>
<dbReference type="PIR" id="A60558">
    <property type="entry name" value="A60558"/>
</dbReference>
<dbReference type="RefSeq" id="NP_000768.1">
    <molecule id="P20815-1"/>
    <property type="nucleotide sequence ID" value="NM_000777.5"/>
</dbReference>
<dbReference type="RefSeq" id="NP_001177413.1">
    <molecule id="P20815-2"/>
    <property type="nucleotide sequence ID" value="NM_001190484.3"/>
</dbReference>
<dbReference type="PDB" id="5VEU">
    <property type="method" value="X-ray"/>
    <property type="resolution" value="2.91 A"/>
    <property type="chains" value="A/B/C/D/E/F/G/H/I/J/K/L=24-497"/>
</dbReference>
<dbReference type="PDBsum" id="5VEU"/>
<dbReference type="SMR" id="P20815"/>
<dbReference type="BioGRID" id="107949">
    <property type="interactions" value="12"/>
</dbReference>
<dbReference type="CORUM" id="P20815"/>
<dbReference type="FunCoup" id="P20815">
    <property type="interactions" value="438"/>
</dbReference>
<dbReference type="IntAct" id="P20815">
    <property type="interactions" value="11"/>
</dbReference>
<dbReference type="STRING" id="9606.ENSP00000222982"/>
<dbReference type="BindingDB" id="P20815"/>
<dbReference type="ChEMBL" id="CHEMBL3019"/>
<dbReference type="DrugBank" id="DB05812">
    <property type="generic name" value="Abiraterone"/>
</dbReference>
<dbReference type="DrugBank" id="DB11703">
    <property type="generic name" value="Acalabrutinib"/>
</dbReference>
<dbReference type="DrugBank" id="DB00802">
    <property type="generic name" value="Alfentanil"/>
</dbReference>
<dbReference type="DrugBank" id="DB00404">
    <property type="generic name" value="Alprazolam"/>
</dbReference>
<dbReference type="DrugBank" id="DB06403">
    <property type="generic name" value="Ambrisentan"/>
</dbReference>
<dbReference type="DrugBank" id="DB13141">
    <property type="generic name" value="Ambroxol acefyllinate"/>
</dbReference>
<dbReference type="DrugBank" id="DB00288">
    <property type="generic name" value="Amcinonide"/>
</dbReference>
<dbReference type="DrugBank" id="DB00321">
    <property type="generic name" value="Amitriptyline"/>
</dbReference>
<dbReference type="DrugBank" id="DB00381">
    <property type="generic name" value="Amlodipine"/>
</dbReference>
<dbReference type="DrugBank" id="DB00701">
    <property type="generic name" value="Amprenavir"/>
</dbReference>
<dbReference type="DrugBank" id="DB01217">
    <property type="generic name" value="Anastrozole"/>
</dbReference>
<dbReference type="DrugBank" id="DB06605">
    <property type="generic name" value="Apixaban"/>
</dbReference>
<dbReference type="DrugBank" id="DB00714">
    <property type="generic name" value="Apomorphine"/>
</dbReference>
<dbReference type="DrugBank" id="DB00278">
    <property type="generic name" value="Argatroban"/>
</dbReference>
<dbReference type="DrugBank" id="DB01238">
    <property type="generic name" value="Aripiprazole"/>
</dbReference>
<dbReference type="DrugBank" id="DB14185">
    <property type="generic name" value="Aripiprazole lauroxil"/>
</dbReference>
<dbReference type="DrugBank" id="DB06413">
    <property type="generic name" value="Armodafinil"/>
</dbReference>
<dbReference type="DrugBank" id="DB06697">
    <property type="generic name" value="Artemether"/>
</dbReference>
<dbReference type="DrugBank" id="DB00637">
    <property type="generic name" value="Astemizole"/>
</dbReference>
<dbReference type="DrugBank" id="DB11586">
    <property type="generic name" value="Asunaprevir"/>
</dbReference>
<dbReference type="DrugBank" id="DB01072">
    <property type="generic name" value="Atazanavir"/>
</dbReference>
<dbReference type="DrugBank" id="DB01076">
    <property type="generic name" value="Atorvastatin"/>
</dbReference>
<dbReference type="DrugBank" id="DB06626">
    <property type="generic name" value="Axitinib"/>
</dbReference>
<dbReference type="DrugBank" id="DB00972">
    <property type="generic name" value="Azelastine"/>
</dbReference>
<dbReference type="DrugBank" id="DB04957">
    <property type="generic name" value="Azimilide"/>
</dbReference>
<dbReference type="DrugBank" id="DB00394">
    <property type="generic name" value="Beclomethasone dipropionate"/>
</dbReference>
<dbReference type="DrugBank" id="DB09231">
    <property type="generic name" value="Benidipine"/>
</dbReference>
<dbReference type="DrugBank" id="DB00443">
    <property type="generic name" value="Betamethasone"/>
</dbReference>
<dbReference type="DrugBank" id="DB14669">
    <property type="generic name" value="Betamethasone phosphate"/>
</dbReference>
<dbReference type="DrugBank" id="DB00905">
    <property type="generic name" value="Bimatoprost"/>
</dbReference>
<dbReference type="DrugBank" id="DB16536">
    <property type="generic name" value="Birch bark extract"/>
</dbReference>
<dbReference type="DrugBank" id="DB08873">
    <property type="generic name" value="Boceprevir"/>
</dbReference>
<dbReference type="DrugBank" id="DB12267">
    <property type="generic name" value="Brigatinib"/>
</dbReference>
<dbReference type="DrugBank" id="DB01222">
    <property type="generic name" value="Budesonide"/>
</dbReference>
<dbReference type="DrugBank" id="DB00921">
    <property type="generic name" value="Buprenorphine"/>
</dbReference>
<dbReference type="DrugBank" id="DB00490">
    <property type="generic name" value="Buspirone"/>
</dbReference>
<dbReference type="DrugBank" id="DB06772">
    <property type="generic name" value="Cabazitaxel"/>
</dbReference>
<dbReference type="DrugBank" id="DB09061">
    <property type="generic name" value="Cannabidiol"/>
</dbReference>
<dbReference type="DrugBank" id="DB14737">
    <property type="generic name" value="Cannabinol"/>
</dbReference>
<dbReference type="DrugBank" id="DB00564">
    <property type="generic name" value="Carbamazepine"/>
</dbReference>
<dbReference type="DrugBank" id="DB06016">
    <property type="generic name" value="Cariprazine"/>
</dbReference>
<dbReference type="DrugBank" id="DB14984">
    <property type="generic name" value="Casimersen"/>
</dbReference>
<dbReference type="DrugBank" id="DB06119">
    <property type="generic name" value="Cenobamate"/>
</dbReference>
<dbReference type="DrugBank" id="DB00439">
    <property type="generic name" value="Cerivastatin"/>
</dbReference>
<dbReference type="DrugBank" id="DB06419">
    <property type="generic name" value="Cethromycin"/>
</dbReference>
<dbReference type="DrugBank" id="DB00446">
    <property type="generic name" value="Chloramphenicol"/>
</dbReference>
<dbReference type="DrugBank" id="DB00608">
    <property type="generic name" value="Chloroquine"/>
</dbReference>
<dbReference type="DrugBank" id="DB01114">
    <property type="generic name" value="Chlorpheniramine"/>
</dbReference>
<dbReference type="DrugBank" id="DB01166">
    <property type="generic name" value="Cilostazol"/>
</dbReference>
<dbReference type="DrugBank" id="DB00501">
    <property type="generic name" value="Cimetidine"/>
</dbReference>
<dbReference type="DrugBank" id="DB00537">
    <property type="generic name" value="Ciprofloxacin"/>
</dbReference>
<dbReference type="DrugBank" id="DB00604">
    <property type="generic name" value="Cisapride"/>
</dbReference>
<dbReference type="DrugBank" id="DB01211">
    <property type="generic name" value="Clarithromycin"/>
</dbReference>
<dbReference type="DrugBank" id="DB01190">
    <property type="generic name" value="Clindamycin"/>
</dbReference>
<dbReference type="DrugBank" id="DB00349">
    <property type="generic name" value="Clobazam"/>
</dbReference>
<dbReference type="DrugBank" id="DB11750">
    <property type="generic name" value="Clobetasol"/>
</dbReference>
<dbReference type="DrugBank" id="DB01013">
    <property type="generic name" value="Clobetasol propionate"/>
</dbReference>
<dbReference type="DrugBank" id="DB14652">
    <property type="generic name" value="Clocortolone acetate"/>
</dbReference>
<dbReference type="DrugBank" id="DB00845">
    <property type="generic name" value="Clofazimine"/>
</dbReference>
<dbReference type="DrugBank" id="DB00575">
    <property type="generic name" value="Clonidine"/>
</dbReference>
<dbReference type="DrugBank" id="DB00758">
    <property type="generic name" value="Clopidogrel"/>
</dbReference>
<dbReference type="DrugBank" id="DB13843">
    <property type="generic name" value="Cloprednol"/>
</dbReference>
<dbReference type="DrugBank" id="DB09065">
    <property type="generic name" value="Cobicistat"/>
</dbReference>
<dbReference type="DrugBank" id="DB05239">
    <property type="generic name" value="Cobimetinib"/>
</dbReference>
<dbReference type="DrugBank" id="DB12483">
    <property type="generic name" value="Copanlisib"/>
</dbReference>
<dbReference type="DrugBank" id="DB14681">
    <property type="generic name" value="Cortisone"/>
</dbReference>
<dbReference type="DrugBank" id="DB01380">
    <property type="generic name" value="Cortisone acetate"/>
</dbReference>
<dbReference type="DrugBank" id="DB13003">
    <property type="generic name" value="Cortivazol"/>
</dbReference>
<dbReference type="DrugBank" id="DB08865">
    <property type="generic name" value="Crizotinib"/>
</dbReference>
<dbReference type="DrugBank" id="DB14635">
    <property type="generic name" value="Curcumin sulfate"/>
</dbReference>
<dbReference type="DrugBank" id="DB00531">
    <property type="generic name" value="Cyclophosphamide"/>
</dbReference>
<dbReference type="DrugBank" id="DB00091">
    <property type="generic name" value="Cyclosporine"/>
</dbReference>
<dbReference type="DrugBank" id="DB09102">
    <property type="generic name" value="Daclatasvir"/>
</dbReference>
<dbReference type="DrugBank" id="DB00250">
    <property type="generic name" value="Dapsone"/>
</dbReference>
<dbReference type="DrugBank" id="DB01254">
    <property type="generic name" value="Dasatinib"/>
</dbReference>
<dbReference type="DrugBank" id="DB00694">
    <property type="generic name" value="Daunorubicin"/>
</dbReference>
<dbReference type="DrugBank" id="DB11921">
    <property type="generic name" value="Deflazacort"/>
</dbReference>
<dbReference type="DrugBank" id="DB00705">
    <property type="generic name" value="Delavirdine"/>
</dbReference>
<dbReference type="DrugBank" id="DB12161">
    <property type="generic name" value="Deutetrabenazine"/>
</dbReference>
<dbReference type="DrugBank" id="DB01234">
    <property type="generic name" value="Dexamethasone"/>
</dbReference>
<dbReference type="DrugBank" id="DB14649">
    <property type="generic name" value="Dexamethasone acetate"/>
</dbReference>
<dbReference type="DrugBank" id="DB11487">
    <property type="generic name" value="Dexamethasone isonicotinate"/>
</dbReference>
<dbReference type="DrugBank" id="DB04856">
    <property type="generic name" value="Dexloxiglumide"/>
</dbReference>
<dbReference type="DrugBank" id="DB00647">
    <property type="generic name" value="Dextropropoxyphene"/>
</dbReference>
<dbReference type="DrugBank" id="DB11994">
    <property type="generic name" value="Diacerein"/>
</dbReference>
<dbReference type="DrugBank" id="DB00829">
    <property type="generic name" value="Diazepam"/>
</dbReference>
<dbReference type="DrugBank" id="DB09095">
    <property type="generic name" value="Difluocortolone"/>
</dbReference>
<dbReference type="DrugBank" id="DB00343">
    <property type="generic name" value="Diltiazem"/>
</dbReference>
<dbReference type="DrugBank" id="DB00822">
    <property type="generic name" value="Disulfiram"/>
</dbReference>
<dbReference type="DrugBank" id="DB02520">
    <property type="generic name" value="Ditiocarb"/>
</dbReference>
<dbReference type="DrugBank" id="DB01248">
    <property type="generic name" value="Docetaxel"/>
</dbReference>
<dbReference type="DrugBank" id="DB08930">
    <property type="generic name" value="Dolutegravir"/>
</dbReference>
<dbReference type="DrugBank" id="DB01184">
    <property type="generic name" value="Domperidone"/>
</dbReference>
<dbReference type="DrugBank" id="DB12301">
    <property type="generic name" value="Doravirine"/>
</dbReference>
<dbReference type="DrugBank" id="DB00470">
    <property type="generic name" value="Dronabinol"/>
</dbReference>
<dbReference type="DrugBank" id="DB04855">
    <property type="generic name" value="Dronedarone"/>
</dbReference>
<dbReference type="DrugBank" id="DB01126">
    <property type="generic name" value="Dutasteride"/>
</dbReference>
<dbReference type="DrugBank" id="DB11742">
    <property type="generic name" value="Ebastine"/>
</dbReference>
<dbReference type="DrugBank" id="DB00625">
    <property type="generic name" value="Efavirenz"/>
</dbReference>
<dbReference type="DrugBank" id="DB11979">
    <property type="generic name" value="Elagolix"/>
</dbReference>
<dbReference type="DrugBank" id="DB11574">
    <property type="generic name" value="Elbasvir"/>
</dbReference>
<dbReference type="DrugBank" id="DB15444">
    <property type="generic name" value="Elexacaftor"/>
</dbReference>
<dbReference type="DrugBank" id="DB11718">
    <property type="generic name" value="Encorafenib"/>
</dbReference>
<dbReference type="DrugBank" id="DB08899">
    <property type="generic name" value="Enzalutamide"/>
</dbReference>
<dbReference type="DrugBank" id="DB00700">
    <property type="generic name" value="Eplerenone"/>
</dbReference>
<dbReference type="DrugBank" id="DB00530">
    <property type="generic name" value="Erlotinib"/>
</dbReference>
<dbReference type="DrugBank" id="DB00199">
    <property type="generic name" value="Erythromycin"/>
</dbReference>
<dbReference type="DrugBank" id="DB00783">
    <property type="generic name" value="Estradiol"/>
</dbReference>
<dbReference type="DrugBank" id="DB13952">
    <property type="generic name" value="Estradiol acetate"/>
</dbReference>
<dbReference type="DrugBank" id="DB13953">
    <property type="generic name" value="Estradiol benzoate"/>
</dbReference>
<dbReference type="DrugBank" id="DB13954">
    <property type="generic name" value="Estradiol cypionate"/>
</dbReference>
<dbReference type="DrugBank" id="DB13955">
    <property type="generic name" value="Estradiol dienanthate"/>
</dbReference>
<dbReference type="DrugBank" id="DB13956">
    <property type="generic name" value="Estradiol valerate"/>
</dbReference>
<dbReference type="DrugBank" id="DB00655">
    <property type="generic name" value="Estrone"/>
</dbReference>
<dbReference type="DrugBank" id="DB00977">
    <property type="generic name" value="Ethinylestradiol"/>
</dbReference>
<dbReference type="DrugBank" id="DB00593">
    <property type="generic name" value="Ethosuximide"/>
</dbReference>
<dbReference type="DrugBank" id="DB00773">
    <property type="generic name" value="Etoposide"/>
</dbReference>
<dbReference type="DrugBank" id="DB01023">
    <property type="generic name" value="Felodipine"/>
</dbReference>
<dbReference type="DrugBank" id="DB00574">
    <property type="generic name" value="Fenfluramine"/>
</dbReference>
<dbReference type="DrugBank" id="DB12265">
    <property type="generic name" value="Fexinidazole"/>
</dbReference>
<dbReference type="DrugBank" id="DB01216">
    <property type="generic name" value="Finasteride"/>
</dbReference>
<dbReference type="DrugBank" id="DB00196">
    <property type="generic name" value="Fluconazole"/>
</dbReference>
<dbReference type="DrugBank" id="DB01047">
    <property type="generic name" value="Fluocinonide"/>
</dbReference>
<dbReference type="DrugBank" id="DB08971">
    <property type="generic name" value="Fluocortolone"/>
</dbReference>
<dbReference type="DrugBank" id="DB00324">
    <property type="generic name" value="Fluorometholone"/>
</dbReference>
<dbReference type="DrugBank" id="DB00472">
    <property type="generic name" value="Fluoxetine"/>
</dbReference>
<dbReference type="DrugBank" id="DB08970">
    <property type="generic name" value="Fluprednidene"/>
</dbReference>
<dbReference type="DrugBank" id="DB14634">
    <property type="generic name" value="Fluprednidene acetate"/>
</dbReference>
<dbReference type="DrugBank" id="DB00499">
    <property type="generic name" value="Flutamide"/>
</dbReference>
<dbReference type="DrugBank" id="DB13867">
    <property type="generic name" value="Fluticasone"/>
</dbReference>
<dbReference type="DrugBank" id="DB08906">
    <property type="generic name" value="Fluticasone furoate"/>
</dbReference>
<dbReference type="DrugBank" id="DB00588">
    <property type="generic name" value="Fluticasone propionate"/>
</dbReference>
<dbReference type="DrugBank" id="DB01095">
    <property type="generic name" value="Fluvastatin"/>
</dbReference>
<dbReference type="DrugBank" id="DB00176">
    <property type="generic name" value="Fluvoxamine"/>
</dbReference>
<dbReference type="DrugBank" id="DB12307">
    <property type="generic name" value="Foretinib"/>
</dbReference>
<dbReference type="DrugBank" id="DB11679">
    <property type="generic name" value="Fruquintinib"/>
</dbReference>
<dbReference type="DrugBank" id="DB05087">
    <property type="generic name" value="Ganaxolone"/>
</dbReference>
<dbReference type="DrugBank" id="DB00317">
    <property type="generic name" value="Gefitinib"/>
</dbReference>
<dbReference type="DrugBank" id="DB06730">
    <property type="generic name" value="Gestodene"/>
</dbReference>
<dbReference type="DrugBank" id="DB13879">
    <property type="generic name" value="Glecaprevir"/>
</dbReference>
<dbReference type="DrugBank" id="DB01016">
    <property type="generic name" value="Glyburide"/>
</dbReference>
<dbReference type="DrugBank" id="DB01218">
    <property type="generic name" value="Halofantrine"/>
</dbReference>
<dbReference type="DrugBank" id="DB13728">
    <property type="generic name" value="Halometasone"/>
</dbReference>
<dbReference type="DrugBank" id="DB00502">
    <property type="generic name" value="Haloperidol"/>
</dbReference>
<dbReference type="DrugBank" id="DB00741">
    <property type="generic name" value="Hydrocortisone"/>
</dbReference>
<dbReference type="DrugBank" id="DB14538">
    <property type="generic name" value="Hydrocortisone aceponate"/>
</dbReference>
<dbReference type="DrugBank" id="DB14539">
    <property type="generic name" value="Hydrocortisone acetate"/>
</dbReference>
<dbReference type="DrugBank" id="DB14540">
    <property type="generic name" value="Hydrocortisone butyrate"/>
</dbReference>
<dbReference type="DrugBank" id="DB14541">
    <property type="generic name" value="Hydrocortisone cypionate"/>
</dbReference>
<dbReference type="DrugBank" id="DB14542">
    <property type="generic name" value="Hydrocortisone phosphate"/>
</dbReference>
<dbReference type="DrugBank" id="DB14543">
    <property type="generic name" value="Hydrocortisone probutate"/>
</dbReference>
<dbReference type="DrugBank" id="DB14544">
    <property type="generic name" value="Hydrocortisone valerate"/>
</dbReference>
<dbReference type="DrugBank" id="DB06789">
    <property type="generic name" value="Hydroxyprogesterone caproate"/>
</dbReference>
<dbReference type="DrugBank" id="DB00557">
    <property type="generic name" value="Hydroxyzine"/>
</dbReference>
<dbReference type="DrugBank" id="DB09053">
    <property type="generic name" value="Ibrutinib"/>
</dbReference>
<dbReference type="DrugBank" id="DB11737">
    <property type="generic name" value="Icotinib"/>
</dbReference>
<dbReference type="DrugBank" id="DB09054">
    <property type="generic name" value="Idelalisib"/>
</dbReference>
<dbReference type="DrugBank" id="DB01181">
    <property type="generic name" value="Ifosfamide"/>
</dbReference>
<dbReference type="DrugBank" id="DB00619">
    <property type="generic name" value="Imatinib"/>
</dbReference>
<dbReference type="DrugBank" id="DB15275">
    <property type="generic name" value="Inavolisib"/>
</dbReference>
<dbReference type="DrugBank" id="DB00224">
    <property type="generic name" value="Indinavir"/>
</dbReference>
<dbReference type="DrugBank" id="DB00762">
    <property type="generic name" value="Irinotecan"/>
</dbReference>
<dbReference type="DrugBank" id="DB11633">
    <property type="generic name" value="Isavuconazole"/>
</dbReference>
<dbReference type="DrugBank" id="DB06636">
    <property type="generic name" value="Isavuconazonium"/>
</dbReference>
<dbReference type="DrugBank" id="DB11757">
    <property type="generic name" value="Istradefylline"/>
</dbReference>
<dbReference type="DrugBank" id="DB01167">
    <property type="generic name" value="Itraconazole"/>
</dbReference>
<dbReference type="DrugBank" id="DB08820">
    <property type="generic name" value="Ivacaftor"/>
</dbReference>
<dbReference type="DrugBank" id="DB01026">
    <property type="generic name" value="Ketoconazole"/>
</dbReference>
<dbReference type="DrugBank" id="DB01259">
    <property type="generic name" value="Lapatinib"/>
</dbReference>
<dbReference type="DrugBank" id="DB11951">
    <property type="generic name" value="Lemborexant"/>
</dbReference>
<dbReference type="DrugBank" id="DB16217">
    <property type="generic name" value="Leniolisib"/>
</dbReference>
<dbReference type="DrugBank" id="DB00528">
    <property type="generic name" value="Lercanidipine"/>
</dbReference>
<dbReference type="DrugBank" id="DB12070">
    <property type="generic name" value="Letermovir"/>
</dbReference>
<dbReference type="DrugBank" id="DB05667">
    <property type="generic name" value="Levoketoconazole"/>
</dbReference>
<dbReference type="DrugBank" id="DB00367">
    <property type="generic name" value="Levonorgestrel"/>
</dbReference>
<dbReference type="DrugBank" id="DB00281">
    <property type="generic name" value="Lidocaine"/>
</dbReference>
<dbReference type="DrugBank" id="DB06448">
    <property type="generic name" value="Lonafarnib"/>
</dbReference>
<dbReference type="DrugBank" id="DB16222">
    <property type="generic name" value="Loncastuximab tesirine"/>
</dbReference>
<dbReference type="DrugBank" id="DB01601">
    <property type="generic name" value="Lopinavir"/>
</dbReference>
<dbReference type="DrugBank" id="DB00455">
    <property type="generic name" value="Loratadine"/>
</dbReference>
<dbReference type="DrugBank" id="DB12130">
    <property type="generic name" value="Lorlatinib"/>
</dbReference>
<dbReference type="DrugBank" id="DB09212">
    <property type="generic name" value="Loxoprofen"/>
</dbReference>
<dbReference type="DrugBank" id="DB14921">
    <property type="generic name" value="Mavacamten"/>
</dbReference>
<dbReference type="DrugBank" id="DB05501">
    <property type="generic name" value="Mavorixafor"/>
</dbReference>
<dbReference type="DrugBank" id="DB00643">
    <property type="generic name" value="Mebendazole"/>
</dbReference>
<dbReference type="DrugBank" id="DB14009">
    <property type="generic name" value="Medical Cannabis"/>
</dbReference>
<dbReference type="DrugBank" id="DB00253">
    <property type="generic name" value="Medrysone"/>
</dbReference>
<dbReference type="DrugBank" id="DB14659">
    <property type="generic name" value="Melengestrol acetate"/>
</dbReference>
<dbReference type="DrugBank" id="DB00170">
    <property type="generic name" value="Menadione"/>
</dbReference>
<dbReference type="DrugBank" id="DB09383">
    <property type="generic name" value="Meprednisone"/>
</dbReference>
<dbReference type="DrugBank" id="DB00333">
    <property type="generic name" value="Methadone"/>
</dbReference>
<dbReference type="DrugBank" id="DB09241">
    <property type="generic name" value="Methylene blue"/>
</dbReference>
<dbReference type="DrugBank" id="DB00959">
    <property type="generic name" value="Methylprednisolone"/>
</dbReference>
<dbReference type="DrugBank" id="DB14644">
    <property type="generic name" value="Methylprednisolone hemisuccinate"/>
</dbReference>
<dbReference type="DrugBank" id="DB00916">
    <property type="generic name" value="Metronidazole"/>
</dbReference>
<dbReference type="DrugBank" id="DB01388">
    <property type="generic name" value="Mibefradil"/>
</dbReference>
<dbReference type="DrugBank" id="DB00683">
    <property type="generic name" value="Midazolam"/>
</dbReference>
<dbReference type="DrugBank" id="DB06595">
    <property type="generic name" value="Midostaurin"/>
</dbReference>
<dbReference type="DrugBank" id="DB00834">
    <property type="generic name" value="Mifepristone"/>
</dbReference>
<dbReference type="DrugBank" id="DB11792">
    <property type="generic name" value="Mirodenafil"/>
</dbReference>
<dbReference type="DrugBank" id="DB00648">
    <property type="generic name" value="Mitotane"/>
</dbReference>
<dbReference type="DrugBank" id="DB16390">
    <property type="generic name" value="Mobocertinib"/>
</dbReference>
<dbReference type="DrugBank" id="DB00745">
    <property type="generic name" value="Modafinil"/>
</dbReference>
<dbReference type="DrugBank" id="DB00764">
    <property type="generic name" value="Mometasone"/>
</dbReference>
<dbReference type="DrugBank" id="DB14512">
    <property type="generic name" value="Mometasone furoate"/>
</dbReference>
<dbReference type="DrugBank" id="DB09205">
    <property type="generic name" value="Moxisylyte"/>
</dbReference>
<dbReference type="DrugBank" id="DB00688">
    <property type="generic name" value="Mycophenolate mofetil"/>
</dbReference>
<dbReference type="DrugBank" id="DB01024">
    <property type="generic name" value="Mycophenolic acid"/>
</dbReference>
<dbReference type="DrugBank" id="DB11605">
    <property type="generic name" value="Myrrh"/>
</dbReference>
<dbReference type="DrugBank" id="DB14011">
    <property type="generic name" value="Nabiximols"/>
</dbReference>
<dbReference type="DrugBank" id="DB11691">
    <property type="generic name" value="Naldemedine"/>
</dbReference>
<dbReference type="DrugBank" id="DB06230">
    <property type="generic name" value="Nalmefene"/>
</dbReference>
<dbReference type="DrugBank" id="DB00731">
    <property type="generic name" value="Nateglinide"/>
</dbReference>
<dbReference type="DrugBank" id="DB01149">
    <property type="generic name" value="Nefazodone"/>
</dbReference>
<dbReference type="DrugBank" id="DB00220">
    <property type="generic name" value="Nelfinavir"/>
</dbReference>
<dbReference type="DrugBank" id="DB00238">
    <property type="generic name" value="Nevirapine"/>
</dbReference>
<dbReference type="DrugBank" id="DB00622">
    <property type="generic name" value="Nicardipine"/>
</dbReference>
<dbReference type="DrugBank" id="DB01115">
    <property type="generic name" value="Nifedipine"/>
</dbReference>
<dbReference type="DrugBank" id="DB00401">
    <property type="generic name" value="Nisoldipine"/>
</dbReference>
<dbReference type="DrugBank" id="DB01054">
    <property type="generic name" value="Nitrendipine"/>
</dbReference>
<dbReference type="DrugBank" id="DB00540">
    <property type="generic name" value="Nortriptyline"/>
</dbReference>
<dbReference type="DrugBank" id="DB00334">
    <property type="generic name" value="Olanzapine"/>
</dbReference>
<dbReference type="DrugBank" id="DB09074">
    <property type="generic name" value="Olaparib"/>
</dbReference>
<dbReference type="DrugBank" id="DB09568">
    <property type="generic name" value="Omega-3-carboxylic acids"/>
</dbReference>
<dbReference type="DrugBank" id="DB00904">
    <property type="generic name" value="Ondansetron"/>
</dbReference>
<dbReference type="DrugBank" id="DB11837">
    <property type="generic name" value="Osilodrostat"/>
</dbReference>
<dbReference type="DrugBank" id="DB00776">
    <property type="generic name" value="Oxcarbazepine"/>
</dbReference>
<dbReference type="DrugBank" id="DB01062">
    <property type="generic name" value="Oxybutynin"/>
</dbReference>
<dbReference type="DrugBank" id="DB00497">
    <property type="generic name" value="Oxycodone"/>
</dbReference>
<dbReference type="DrugBank" id="DB06412">
    <property type="generic name" value="Oxymetholone"/>
</dbReference>
<dbReference type="DrugBank" id="DB01229">
    <property type="generic name" value="Paclitaxel"/>
</dbReference>
<dbReference type="DrugBank" id="DB01267">
    <property type="generic name" value="Paliperidone"/>
</dbReference>
<dbReference type="DrugBank" id="DB01384">
    <property type="generic name" value="Paramethasone"/>
</dbReference>
<dbReference type="DrugBank" id="DB09297">
    <property type="generic name" value="Paritaprevir"/>
</dbReference>
<dbReference type="DrugBank" id="DB00738">
    <property type="generic name" value="Pentamidine"/>
</dbReference>
<dbReference type="DrugBank" id="DB08883">
    <property type="generic name" value="Perampanel"/>
</dbReference>
<dbReference type="DrugBank" id="DB00780">
    <property type="generic name" value="Phenelzine"/>
</dbReference>
<dbReference type="DrugBank" id="DB01174">
    <property type="generic name" value="Phenobarbital"/>
</dbReference>
<dbReference type="DrugBank" id="DB00252">
    <property type="generic name" value="Phenytoin"/>
</dbReference>
<dbReference type="DrugBank" id="DB13878">
    <property type="generic name" value="Pibrentasvir"/>
</dbReference>
<dbReference type="DrugBank" id="DB05316">
    <property type="generic name" value="Pimavanserin"/>
</dbReference>
<dbReference type="DrugBank" id="DB01100">
    <property type="generic name" value="Pimozide"/>
</dbReference>
<dbReference type="DrugBank" id="DB17472">
    <property type="generic name" value="Pirtobrutinib"/>
</dbReference>
<dbReference type="DrugBank" id="DB12240">
    <property type="generic name" value="Polatuzumab vedotin"/>
</dbReference>
<dbReference type="DrugBank" id="DB08901">
    <property type="generic name" value="Ponatinib"/>
</dbReference>
<dbReference type="DrugBank" id="DB12016">
    <property type="generic name" value="Ponesimod"/>
</dbReference>
<dbReference type="DrugBank" id="DB15822">
    <property type="generic name" value="Pralsetinib"/>
</dbReference>
<dbReference type="DrugBank" id="DB01058">
    <property type="generic name" value="Praziquantel"/>
</dbReference>
<dbReference type="DrugBank" id="DB14633">
    <property type="generic name" value="Prednisolone hemisuccinate"/>
</dbReference>
<dbReference type="DrugBank" id="DB14631">
    <property type="generic name" value="Prednisolone phosphate"/>
</dbReference>
<dbReference type="DrugBank" id="DB00635">
    <property type="generic name" value="Prednisone"/>
</dbReference>
<dbReference type="DrugBank" id="DB14646">
    <property type="generic name" value="Prednisone acetate"/>
</dbReference>
<dbReference type="DrugBank" id="DB13208">
    <property type="generic name" value="Prednylidene"/>
</dbReference>
<dbReference type="DrugBank" id="DB00396">
    <property type="generic name" value="Progesterone"/>
</dbReference>
<dbReference type="DrugBank" id="DB00571">
    <property type="generic name" value="Propranolol"/>
</dbReference>
<dbReference type="DrugBank" id="DB04216">
    <property type="generic name" value="Quercetin"/>
</dbReference>
<dbReference type="DrugBank" id="DB01224">
    <property type="generic name" value="Quetiapine"/>
</dbReference>
<dbReference type="DrugBank" id="DB01103">
    <property type="generic name" value="Quinacrine"/>
</dbReference>
<dbReference type="DrugBank" id="DB00468">
    <property type="generic name" value="Quinine"/>
</dbReference>
<dbReference type="DrugBank" id="DB12874">
    <property type="generic name" value="Quizartinib"/>
</dbReference>
<dbReference type="DrugBank" id="DB11853">
    <property type="generic name" value="Relugolix"/>
</dbReference>
<dbReference type="DrugBank" id="DB00409">
    <property type="generic name" value="Remoxipride"/>
</dbReference>
<dbReference type="DrugBank" id="DB16826">
    <property type="generic name" value="Repotrectinib"/>
</dbReference>
<dbReference type="DrugBank" id="DB00206">
    <property type="generic name" value="Reserpine"/>
</dbReference>
<dbReference type="DrugBank" id="DB13174">
    <property type="generic name" value="Rhein"/>
</dbReference>
<dbReference type="DrugBank" id="DB01045">
    <property type="generic name" value="Rifampin"/>
</dbReference>
<dbReference type="DrugBank" id="DB01201">
    <property type="generic name" value="Rifapentine"/>
</dbReference>
<dbReference type="DrugBank" id="DB00896">
    <property type="generic name" value="Rimexolone"/>
</dbReference>
<dbReference type="DrugBank" id="DB15305">
    <property type="generic name" value="Risdiplam"/>
</dbReference>
<dbReference type="DrugBank" id="DB00503">
    <property type="generic name" value="Ritonavir"/>
</dbReference>
<dbReference type="DrugBank" id="DB06228">
    <property type="generic name" value="Rivaroxaban"/>
</dbReference>
<dbReference type="DrugBank" id="DB06176">
    <property type="generic name" value="Romidepsin"/>
</dbReference>
<dbReference type="DrugBank" id="DB12332">
    <property type="generic name" value="Rucaparib"/>
</dbReference>
<dbReference type="DrugBank" id="DB06654">
    <property type="generic name" value="Safinamide"/>
</dbReference>
<dbReference type="DrugBank" id="DB00938">
    <property type="generic name" value="Salmeterol"/>
</dbReference>
<dbReference type="DrugBank" id="DB12543">
    <property type="generic name" value="Samidorphan"/>
</dbReference>
<dbReference type="DrugBank" id="DB01232">
    <property type="generic name" value="Saquinavir"/>
</dbReference>
<dbReference type="DrugBank" id="DB06335">
    <property type="generic name" value="Saxagliptin"/>
</dbReference>
<dbReference type="DrugBank" id="DB12834">
    <property type="generic name" value="Secnidazole"/>
</dbReference>
<dbReference type="DrugBank" id="DB15685">
    <property type="generic name" value="Selpercatinib"/>
</dbReference>
<dbReference type="DrugBank" id="DB11689">
    <property type="generic name" value="Selumetinib"/>
</dbReference>
<dbReference type="DrugBank" id="DB06731">
    <property type="generic name" value="Seproxetine"/>
</dbReference>
<dbReference type="DrugBank" id="DB00203">
    <property type="generic name" value="Sildenafil"/>
</dbReference>
<dbReference type="DrugBank" id="DB00641">
    <property type="generic name" value="Simvastatin"/>
</dbReference>
<dbReference type="DrugBank" id="DB00877">
    <property type="generic name" value="Sirolimus"/>
</dbReference>
<dbReference type="DrugBank" id="DB00398">
    <property type="generic name" value="Sorafenib"/>
</dbReference>
<dbReference type="DrugBank" id="DB15569">
    <property type="generic name" value="Sotorasib"/>
</dbReference>
<dbReference type="DrugBank" id="DB01268">
    <property type="generic name" value="Sunitinib"/>
</dbReference>
<dbReference type="DrugBank" id="DB00864">
    <property type="generic name" value="Tacrolimus"/>
</dbReference>
<dbReference type="DrugBank" id="DB00675">
    <property type="generic name" value="Tamoxifen"/>
</dbReference>
<dbReference type="DrugBank" id="DB12887">
    <property type="generic name" value="Tazemetostat"/>
</dbReference>
<dbReference type="DrugBank" id="DB09256">
    <property type="generic name" value="Tegafur"/>
</dbReference>
<dbReference type="DrugBank" id="DB06287">
    <property type="generic name" value="Temsirolimus"/>
</dbReference>
<dbReference type="DrugBank" id="DB11761">
    <property type="generic name" value="Tenapanor"/>
</dbReference>
<dbReference type="DrugBank" id="DB00444">
    <property type="generic name" value="Teniposide"/>
</dbReference>
<dbReference type="DrugBank" id="DB00342">
    <property type="generic name" value="Terfenadine"/>
</dbReference>
<dbReference type="DrugBank" id="DB00624">
    <property type="generic name" value="Testosterone"/>
</dbReference>
<dbReference type="DrugBank" id="DB13943">
    <property type="generic name" value="Testosterone cypionate"/>
</dbReference>
<dbReference type="DrugBank" id="DB13944">
    <property type="generic name" value="Testosterone enanthate"/>
</dbReference>
<dbReference type="DrugBank" id="DB13946">
    <property type="generic name" value="Testosterone undecanoate"/>
</dbReference>
<dbReference type="DrugBank" id="DB11712">
    <property type="generic name" value="Tezacaftor"/>
</dbReference>
<dbReference type="DrugBank" id="DB01041">
    <property type="generic name" value="Thalidomide"/>
</dbReference>
<dbReference type="DrugBank" id="DB00599">
    <property type="generic name" value="Thiopental"/>
</dbReference>
<dbReference type="DrugBank" id="DB08816">
    <property type="generic name" value="Ticagrelor"/>
</dbReference>
<dbReference type="DrugBank" id="DB05773">
    <property type="generic name" value="Trastuzumab emtansine"/>
</dbReference>
<dbReference type="DrugBank" id="DB00656">
    <property type="generic name" value="Trazodone"/>
</dbReference>
<dbReference type="DrugBank" id="DB00755">
    <property type="generic name" value="Tretinoin"/>
</dbReference>
<dbReference type="DrugBank" id="DB00620">
    <property type="generic name" value="Triamcinolone"/>
</dbReference>
<dbReference type="DrugBank" id="DB00897">
    <property type="generic name" value="Triazolam"/>
</dbReference>
<dbReference type="DrugBank" id="DB00197">
    <property type="generic name" value="Troglitazone"/>
</dbReference>
<dbReference type="DrugBank" id="DB13179">
    <property type="generic name" value="Troleandomycin"/>
</dbReference>
<dbReference type="DrugBank" id="DB11652">
    <property type="generic name" value="Tucatinib"/>
</dbReference>
<dbReference type="DrugBank" id="DB06267">
    <property type="generic name" value="Udenafil"/>
</dbReference>
<dbReference type="DrugBank" id="DB13609">
    <property type="generic name" value="Umifenovir"/>
</dbReference>
<dbReference type="DrugBank" id="DB01586">
    <property type="generic name" value="Ursodeoxycholic acid"/>
</dbReference>
<dbReference type="DrugBank" id="DB11915">
    <property type="generic name" value="Valbenazine"/>
</dbReference>
<dbReference type="DrugBank" id="DB00313">
    <property type="generic name" value="Valproic acid"/>
</dbReference>
<dbReference type="DrugBank" id="DB15114">
    <property type="generic name" value="Vamorolone"/>
</dbReference>
<dbReference type="DrugBank" id="DB00862">
    <property type="generic name" value="Vardenafil"/>
</dbReference>
<dbReference type="DrugBank" id="DB00661">
    <property type="generic name" value="Verapamil"/>
</dbReference>
<dbReference type="DrugBank" id="DB06652">
    <property type="generic name" value="Vicriviroc"/>
</dbReference>
<dbReference type="DrugBank" id="DB09185">
    <property type="generic name" value="Viloxazine"/>
</dbReference>
<dbReference type="DrugBank" id="DB00541">
    <property type="generic name" value="Vincristine"/>
</dbReference>
<dbReference type="DrugBank" id="DB11739">
    <property type="generic name" value="Vonoprazan"/>
</dbReference>
<dbReference type="DrugBank" id="DB00582">
    <property type="generic name" value="Voriconazole"/>
</dbReference>
<dbReference type="DrugBank" id="DB09068">
    <property type="generic name" value="Vortioxetine"/>
</dbReference>
<dbReference type="DrugBank" id="DB00962">
    <property type="generic name" value="Zaleplon"/>
</dbReference>
<dbReference type="DrugBank" id="DB15035">
    <property type="generic name" value="Zanubrutinib"/>
</dbReference>
<dbReference type="DrugBank" id="DB00909">
    <property type="generic name" value="Zonisamide"/>
</dbReference>
<dbReference type="DrugCentral" id="P20815"/>
<dbReference type="GuidetoPHARMACOLOGY" id="1338"/>
<dbReference type="SwissLipids" id="SLP:000001325"/>
<dbReference type="GlyGen" id="P20815">
    <property type="glycosylation" value="2 sites, 1 O-linked glycan (1 site)"/>
</dbReference>
<dbReference type="iPTMnet" id="P20815"/>
<dbReference type="PhosphoSitePlus" id="P20815"/>
<dbReference type="BioMuta" id="CYP3A5"/>
<dbReference type="DMDM" id="117157"/>
<dbReference type="jPOST" id="P20815"/>
<dbReference type="MassIVE" id="P20815"/>
<dbReference type="PaxDb" id="9606-ENSP00000222982"/>
<dbReference type="PeptideAtlas" id="P20815"/>
<dbReference type="ProteomicsDB" id="53804">
    <molecule id="P20815-1"/>
</dbReference>
<dbReference type="ProteomicsDB" id="53805">
    <molecule id="P20815-2"/>
</dbReference>
<dbReference type="Antibodypedia" id="30428">
    <property type="antibodies" value="209 antibodies from 32 providers"/>
</dbReference>
<dbReference type="DNASU" id="1577"/>
<dbReference type="Ensembl" id="ENST00000222982.8">
    <molecule id="P20815-1"/>
    <property type="protein sequence ID" value="ENSP00000222982.4"/>
    <property type="gene ID" value="ENSG00000106258.16"/>
</dbReference>
<dbReference type="Ensembl" id="ENST00000439761.3">
    <molecule id="P20815-2"/>
    <property type="protein sequence ID" value="ENSP00000401269.1"/>
    <property type="gene ID" value="ENSG00000106258.16"/>
</dbReference>
<dbReference type="Ensembl" id="ENST00000646887.1">
    <molecule id="P20815-2"/>
    <property type="protein sequence ID" value="ENSP00000496704.1"/>
    <property type="gene ID" value="ENSG00000106258.16"/>
</dbReference>
<dbReference type="GeneID" id="1577"/>
<dbReference type="KEGG" id="hsa:1577"/>
<dbReference type="MANE-Select" id="ENST00000222982.8">
    <property type="protein sequence ID" value="ENSP00000222982.4"/>
    <property type="RefSeq nucleotide sequence ID" value="NM_000777.5"/>
    <property type="RefSeq protein sequence ID" value="NP_000768.1"/>
</dbReference>
<dbReference type="UCSC" id="uc003urq.4">
    <molecule id="P20815-1"/>
    <property type="organism name" value="human"/>
</dbReference>
<dbReference type="AGR" id="HGNC:2638"/>
<dbReference type="CTD" id="1577"/>
<dbReference type="DisGeNET" id="1577"/>
<dbReference type="GeneCards" id="CYP3A5"/>
<dbReference type="HGNC" id="HGNC:2638">
    <property type="gene designation" value="CYP3A5"/>
</dbReference>
<dbReference type="HPA" id="ENSG00000106258">
    <property type="expression patterns" value="Tissue enhanced (intestine, liver)"/>
</dbReference>
<dbReference type="MalaCards" id="CYP3A5"/>
<dbReference type="MIM" id="605325">
    <property type="type" value="gene"/>
</dbReference>
<dbReference type="neXtProt" id="NX_P20815"/>
<dbReference type="OpenTargets" id="ENSG00000106258"/>
<dbReference type="PharmGKB" id="PA131"/>
<dbReference type="VEuPathDB" id="HostDB:ENSG00000106258"/>
<dbReference type="eggNOG" id="KOG0158">
    <property type="taxonomic scope" value="Eukaryota"/>
</dbReference>
<dbReference type="GeneTree" id="ENSGT00950000182958"/>
<dbReference type="HOGENOM" id="CLU_001570_5_2_1"/>
<dbReference type="InParanoid" id="P20815"/>
<dbReference type="OMA" id="MKHYGEV"/>
<dbReference type="OrthoDB" id="1470350at2759"/>
<dbReference type="PAN-GO" id="P20815">
    <property type="GO annotations" value="4 GO annotations based on evolutionary models"/>
</dbReference>
<dbReference type="PhylomeDB" id="P20815"/>
<dbReference type="TreeFam" id="TF105087"/>
<dbReference type="BRENDA" id="1.14.14.1">
    <property type="organism ID" value="2681"/>
</dbReference>
<dbReference type="PathwayCommons" id="P20815"/>
<dbReference type="Reactome" id="R-HSA-211981">
    <property type="pathway name" value="Xenobiotics"/>
</dbReference>
<dbReference type="Reactome" id="R-HSA-5423646">
    <property type="pathway name" value="Aflatoxin activation and detoxification"/>
</dbReference>
<dbReference type="SABIO-RK" id="P20815"/>
<dbReference type="SignaLink" id="P20815"/>
<dbReference type="UniPathway" id="UPA00912"/>
<dbReference type="BioGRID-ORCS" id="1577">
    <property type="hits" value="9 hits in 1144 CRISPR screens"/>
</dbReference>
<dbReference type="ChiTaRS" id="CYP3A5">
    <property type="organism name" value="human"/>
</dbReference>
<dbReference type="GeneWiki" id="CYP3A5"/>
<dbReference type="GenomeRNAi" id="1577"/>
<dbReference type="Pharos" id="P20815">
    <property type="development level" value="Tclin"/>
</dbReference>
<dbReference type="PRO" id="PR:P20815"/>
<dbReference type="Proteomes" id="UP000005640">
    <property type="component" value="Chromosome 7"/>
</dbReference>
<dbReference type="RNAct" id="P20815">
    <property type="molecule type" value="protein"/>
</dbReference>
<dbReference type="Bgee" id="ENSG00000106258">
    <property type="expression patterns" value="Expressed in jejunal mucosa and 161 other cell types or tissues"/>
</dbReference>
<dbReference type="ExpressionAtlas" id="P20815">
    <property type="expression patterns" value="baseline and differential"/>
</dbReference>
<dbReference type="GO" id="GO:0005789">
    <property type="term" value="C:endoplasmic reticulum membrane"/>
    <property type="evidence" value="ECO:0000304"/>
    <property type="project" value="Reactome"/>
</dbReference>
<dbReference type="GO" id="GO:0043231">
    <property type="term" value="C:intracellular membrane-bounded organelle"/>
    <property type="evidence" value="ECO:0000304"/>
    <property type="project" value="ProtInc"/>
</dbReference>
<dbReference type="GO" id="GO:0101020">
    <property type="term" value="F:estrogen 16-alpha-hydroxylase activity"/>
    <property type="evidence" value="ECO:0000314"/>
    <property type="project" value="BHF-UCL"/>
</dbReference>
<dbReference type="GO" id="GO:0101021">
    <property type="term" value="F:estrogen 2-hydroxylase activity"/>
    <property type="evidence" value="ECO:0007669"/>
    <property type="project" value="RHEA"/>
</dbReference>
<dbReference type="GO" id="GO:0020037">
    <property type="term" value="F:heme binding"/>
    <property type="evidence" value="ECO:0007669"/>
    <property type="project" value="InterPro"/>
</dbReference>
<dbReference type="GO" id="GO:0005506">
    <property type="term" value="F:iron ion binding"/>
    <property type="evidence" value="ECO:0007669"/>
    <property type="project" value="InterPro"/>
</dbReference>
<dbReference type="GO" id="GO:0004497">
    <property type="term" value="F:monooxygenase activity"/>
    <property type="evidence" value="ECO:0000250"/>
    <property type="project" value="UniProtKB"/>
</dbReference>
<dbReference type="GO" id="GO:0016491">
    <property type="term" value="F:oxidoreductase activity"/>
    <property type="evidence" value="ECO:0000314"/>
    <property type="project" value="BHF-UCL"/>
</dbReference>
<dbReference type="GO" id="GO:0019825">
    <property type="term" value="F:oxygen binding"/>
    <property type="evidence" value="ECO:0000304"/>
    <property type="project" value="ProtInc"/>
</dbReference>
<dbReference type="GO" id="GO:0008401">
    <property type="term" value="F:retinoic acid 4-hydroxylase activity"/>
    <property type="evidence" value="ECO:0000314"/>
    <property type="project" value="UniProtKB"/>
</dbReference>
<dbReference type="GO" id="GO:0050649">
    <property type="term" value="F:testosterone 6-beta-hydroxylase activity"/>
    <property type="evidence" value="ECO:0000318"/>
    <property type="project" value="GO_Central"/>
</dbReference>
<dbReference type="GO" id="GO:0046222">
    <property type="term" value="P:aflatoxin metabolic process"/>
    <property type="evidence" value="ECO:0000304"/>
    <property type="project" value="Reactome"/>
</dbReference>
<dbReference type="GO" id="GO:0009822">
    <property type="term" value="P:alkaloid catabolic process"/>
    <property type="evidence" value="ECO:0000314"/>
    <property type="project" value="BHF-UCL"/>
</dbReference>
<dbReference type="GO" id="GO:0008210">
    <property type="term" value="P:estrogen metabolic process"/>
    <property type="evidence" value="ECO:0000314"/>
    <property type="project" value="UniProtKB"/>
</dbReference>
<dbReference type="GO" id="GO:0002933">
    <property type="term" value="P:lipid hydroxylation"/>
    <property type="evidence" value="ECO:0000314"/>
    <property type="project" value="BHF-UCL"/>
</dbReference>
<dbReference type="GO" id="GO:0070989">
    <property type="term" value="P:oxidative demethylation"/>
    <property type="evidence" value="ECO:0000314"/>
    <property type="project" value="BHF-UCL"/>
</dbReference>
<dbReference type="GO" id="GO:0042573">
    <property type="term" value="P:retinoic acid metabolic process"/>
    <property type="evidence" value="ECO:0000314"/>
    <property type="project" value="UniProtKB"/>
</dbReference>
<dbReference type="GO" id="GO:0042572">
    <property type="term" value="P:retinol metabolic process"/>
    <property type="evidence" value="ECO:0007669"/>
    <property type="project" value="UniProtKB-UniPathway"/>
</dbReference>
<dbReference type="GO" id="GO:0008202">
    <property type="term" value="P:steroid metabolic process"/>
    <property type="evidence" value="ECO:0000314"/>
    <property type="project" value="BHF-UCL"/>
</dbReference>
<dbReference type="GO" id="GO:0042178">
    <property type="term" value="P:xenobiotic catabolic process"/>
    <property type="evidence" value="ECO:0000314"/>
    <property type="project" value="BHF-UCL"/>
</dbReference>
<dbReference type="GO" id="GO:0006805">
    <property type="term" value="P:xenobiotic metabolic process"/>
    <property type="evidence" value="ECO:0000304"/>
    <property type="project" value="Reactome"/>
</dbReference>
<dbReference type="CDD" id="cd20650">
    <property type="entry name" value="CYP3A"/>
    <property type="match status" value="1"/>
</dbReference>
<dbReference type="FunFam" id="1.10.630.10:FF:000182">
    <property type="entry name" value="Cytochrome P450 3A4"/>
    <property type="match status" value="1"/>
</dbReference>
<dbReference type="Gene3D" id="1.10.630.10">
    <property type="entry name" value="Cytochrome P450"/>
    <property type="match status" value="1"/>
</dbReference>
<dbReference type="InterPro" id="IPR001128">
    <property type="entry name" value="Cyt_P450"/>
</dbReference>
<dbReference type="InterPro" id="IPR017972">
    <property type="entry name" value="Cyt_P450_CS"/>
</dbReference>
<dbReference type="InterPro" id="IPR008072">
    <property type="entry name" value="Cyt_P450_E_CYP3A"/>
</dbReference>
<dbReference type="InterPro" id="IPR002402">
    <property type="entry name" value="Cyt_P450_E_grp-II"/>
</dbReference>
<dbReference type="InterPro" id="IPR036396">
    <property type="entry name" value="Cyt_P450_sf"/>
</dbReference>
<dbReference type="InterPro" id="IPR050705">
    <property type="entry name" value="Cytochrome_P450_3A"/>
</dbReference>
<dbReference type="PANTHER" id="PTHR24302:SF38">
    <property type="entry name" value="CYTOCHROME P450 3A5"/>
    <property type="match status" value="1"/>
</dbReference>
<dbReference type="PANTHER" id="PTHR24302">
    <property type="entry name" value="CYTOCHROME P450 FAMILY 3"/>
    <property type="match status" value="1"/>
</dbReference>
<dbReference type="Pfam" id="PF00067">
    <property type="entry name" value="p450"/>
    <property type="match status" value="1"/>
</dbReference>
<dbReference type="PRINTS" id="PR00464">
    <property type="entry name" value="EP450II"/>
</dbReference>
<dbReference type="PRINTS" id="PR01689">
    <property type="entry name" value="EP450IICYP3A"/>
</dbReference>
<dbReference type="PRINTS" id="PR00385">
    <property type="entry name" value="P450"/>
</dbReference>
<dbReference type="SUPFAM" id="SSF48264">
    <property type="entry name" value="Cytochrome P450"/>
    <property type="match status" value="1"/>
</dbReference>
<dbReference type="PROSITE" id="PS00086">
    <property type="entry name" value="CYTOCHROME_P450"/>
    <property type="match status" value="1"/>
</dbReference>
<organism>
    <name type="scientific">Homo sapiens</name>
    <name type="common">Human</name>
    <dbReference type="NCBI Taxonomy" id="9606"/>
    <lineage>
        <taxon>Eukaryota</taxon>
        <taxon>Metazoa</taxon>
        <taxon>Chordata</taxon>
        <taxon>Craniata</taxon>
        <taxon>Vertebrata</taxon>
        <taxon>Euteleostomi</taxon>
        <taxon>Mammalia</taxon>
        <taxon>Eutheria</taxon>
        <taxon>Euarchontoglires</taxon>
        <taxon>Primates</taxon>
        <taxon>Haplorrhini</taxon>
        <taxon>Catarrhini</taxon>
        <taxon>Hominidae</taxon>
        <taxon>Homo</taxon>
    </lineage>
</organism>
<accession>P20815</accession>
<accession>A4D289</accession>
<accession>B7Z5I7</accession>
<accession>Q53WY8</accession>
<accession>Q75MV0</accession>
<accession>Q9HB56</accession>
<comment type="function">
    <text evidence="2 3 5 8">A cytochrome P450 monooxygenase involved in the metabolism of steroid hormones and vitamins (PubMed:10681376, PubMed:11093772, PubMed:12865317, PubMed:2732228). Mechanistically, uses molecular oxygen inserting one oxygen atom into a substrate, and reducing the second into a water molecule, with two electrons provided by NADPH via cytochrome P450 reductase (NADPH--hemoprotein reductase). Catalyzes the hydroxylation of carbon-hydrogen bonds (PubMed:10681376, PubMed:11093772, PubMed:12865317, PubMed:2732228). Exhibits high catalytic activity for the formation of catechol estrogens from 17beta-estradiol (E2) and estrone (E1), namely 2-hydroxy E1 and E2 (PubMed:12865317). Catalyzes 6beta-hydroxylation of the steroid hormones testosterone, progesterone, and androstenedione (PubMed:2732228). Catalyzes the oxidative conversion of all-trans-retinol to all-trans-retinal, a rate-limiting step for the biosynthesis of all-trans-retinoic acid (atRA) (PubMed:10681376). Further metabolizes all trans-retinoic acid (atRA) to 4-hydroxyretinoate and may play a role in hepatic atRA clearance (PubMed:11093772). Also involved in the oxidative metabolism of xenobiotics, including calcium channel blocking drug nifedipine and immunosuppressive drug cyclosporine (PubMed:2732228).</text>
</comment>
<comment type="catalytic activity">
    <reaction evidence="3 5 8">
        <text>an organic molecule + reduced [NADPH--hemoprotein reductase] + O2 = an alcohol + oxidized [NADPH--hemoprotein reductase] + H2O + H(+)</text>
        <dbReference type="Rhea" id="RHEA:17149"/>
        <dbReference type="Rhea" id="RHEA-COMP:11964"/>
        <dbReference type="Rhea" id="RHEA-COMP:11965"/>
        <dbReference type="ChEBI" id="CHEBI:15377"/>
        <dbReference type="ChEBI" id="CHEBI:15378"/>
        <dbReference type="ChEBI" id="CHEBI:15379"/>
        <dbReference type="ChEBI" id="CHEBI:30879"/>
        <dbReference type="ChEBI" id="CHEBI:57618"/>
        <dbReference type="ChEBI" id="CHEBI:58210"/>
        <dbReference type="ChEBI" id="CHEBI:142491"/>
        <dbReference type="EC" id="1.14.14.1"/>
    </reaction>
    <physiologicalReaction direction="left-to-right" evidence="17 19 20">
        <dbReference type="Rhea" id="RHEA:17150"/>
    </physiologicalReaction>
</comment>
<comment type="catalytic activity">
    <reaction evidence="5">
        <text>17beta-estradiol + reduced [NADPH--hemoprotein reductase] + O2 = 2-hydroxy-17beta-estradiol + oxidized [NADPH--hemoprotein reductase] + H2O + H(+)</text>
        <dbReference type="Rhea" id="RHEA:47212"/>
        <dbReference type="Rhea" id="RHEA-COMP:11964"/>
        <dbReference type="Rhea" id="RHEA-COMP:11965"/>
        <dbReference type="ChEBI" id="CHEBI:15377"/>
        <dbReference type="ChEBI" id="CHEBI:15378"/>
        <dbReference type="ChEBI" id="CHEBI:15379"/>
        <dbReference type="ChEBI" id="CHEBI:16469"/>
        <dbReference type="ChEBI" id="CHEBI:28744"/>
        <dbReference type="ChEBI" id="CHEBI:57618"/>
        <dbReference type="ChEBI" id="CHEBI:58210"/>
    </reaction>
    <physiologicalReaction direction="left-to-right" evidence="19">
        <dbReference type="Rhea" id="RHEA:47213"/>
    </physiologicalReaction>
</comment>
<comment type="catalytic activity">
    <reaction evidence="5">
        <text>17beta-estradiol + reduced [NADPH--hemoprotein reductase] + O2 = 4-hydroxy-17beta-estradiol + oxidized [NADPH--hemoprotein reductase] + H2O + H(+)</text>
        <dbReference type="Rhea" id="RHEA:47280"/>
        <dbReference type="Rhea" id="RHEA-COMP:11964"/>
        <dbReference type="Rhea" id="RHEA-COMP:11965"/>
        <dbReference type="ChEBI" id="CHEBI:15377"/>
        <dbReference type="ChEBI" id="CHEBI:15378"/>
        <dbReference type="ChEBI" id="CHEBI:15379"/>
        <dbReference type="ChEBI" id="CHEBI:16469"/>
        <dbReference type="ChEBI" id="CHEBI:57618"/>
        <dbReference type="ChEBI" id="CHEBI:58210"/>
        <dbReference type="ChEBI" id="CHEBI:62845"/>
    </reaction>
    <physiologicalReaction direction="left-to-right" evidence="19">
        <dbReference type="Rhea" id="RHEA:47281"/>
    </physiologicalReaction>
</comment>
<comment type="catalytic activity">
    <reaction evidence="5">
        <text>estrone + reduced [NADPH--hemoprotein reductase] + O2 = 2-hydroxyestrone + oxidized [NADPH--hemoprotein reductase] + H2O + H(+)</text>
        <dbReference type="Rhea" id="RHEA:47208"/>
        <dbReference type="Rhea" id="RHEA-COMP:11964"/>
        <dbReference type="Rhea" id="RHEA-COMP:11965"/>
        <dbReference type="ChEBI" id="CHEBI:1156"/>
        <dbReference type="ChEBI" id="CHEBI:15377"/>
        <dbReference type="ChEBI" id="CHEBI:15378"/>
        <dbReference type="ChEBI" id="CHEBI:15379"/>
        <dbReference type="ChEBI" id="CHEBI:17263"/>
        <dbReference type="ChEBI" id="CHEBI:57618"/>
        <dbReference type="ChEBI" id="CHEBI:58210"/>
    </reaction>
    <physiologicalReaction direction="left-to-right" evidence="19">
        <dbReference type="Rhea" id="RHEA:47209"/>
    </physiologicalReaction>
</comment>
<comment type="catalytic activity">
    <reaction evidence="5">
        <text>estrone + reduced [NADPH--hemoprotein reductase] + O2 = 4-hydroxyestrone + oxidized [NADPH--hemoprotein reductase] + H2O + H(+)</text>
        <dbReference type="Rhea" id="RHEA:47292"/>
        <dbReference type="Rhea" id="RHEA-COMP:11964"/>
        <dbReference type="Rhea" id="RHEA-COMP:11965"/>
        <dbReference type="ChEBI" id="CHEBI:15377"/>
        <dbReference type="ChEBI" id="CHEBI:15378"/>
        <dbReference type="ChEBI" id="CHEBI:15379"/>
        <dbReference type="ChEBI" id="CHEBI:17263"/>
        <dbReference type="ChEBI" id="CHEBI:57618"/>
        <dbReference type="ChEBI" id="CHEBI:58210"/>
        <dbReference type="ChEBI" id="CHEBI:87602"/>
    </reaction>
    <physiologicalReaction direction="left-to-right" evidence="19">
        <dbReference type="Rhea" id="RHEA:47293"/>
    </physiologicalReaction>
</comment>
<comment type="catalytic activity">
    <reaction evidence="8">
        <text>testosterone + reduced [NADPH--hemoprotein reductase] + O2 = 6beta,17beta-dihydroxyandrost-4-en-3-one + oxidized [NADPH--hemoprotein reductase] + H2O + H(+)</text>
        <dbReference type="Rhea" id="RHEA:46296"/>
        <dbReference type="Rhea" id="RHEA-COMP:11964"/>
        <dbReference type="Rhea" id="RHEA-COMP:11965"/>
        <dbReference type="ChEBI" id="CHEBI:15377"/>
        <dbReference type="ChEBI" id="CHEBI:15378"/>
        <dbReference type="ChEBI" id="CHEBI:15379"/>
        <dbReference type="ChEBI" id="CHEBI:17347"/>
        <dbReference type="ChEBI" id="CHEBI:34477"/>
        <dbReference type="ChEBI" id="CHEBI:57618"/>
        <dbReference type="ChEBI" id="CHEBI:58210"/>
    </reaction>
    <physiologicalReaction direction="left-to-right" evidence="20">
        <dbReference type="Rhea" id="RHEA:46297"/>
    </physiologicalReaction>
</comment>
<comment type="catalytic activity">
    <reaction evidence="8">
        <text>androst-4-ene-3,17-dione + reduced [NADPH--hemoprotein reductase] + O2 = 6beta-hydroxyandrost-4-ene-3,17-dione + oxidized [NADPH--hemoprotein reductase] + H2O + H(+)</text>
        <dbReference type="Rhea" id="RHEA:47256"/>
        <dbReference type="Rhea" id="RHEA-COMP:11964"/>
        <dbReference type="Rhea" id="RHEA-COMP:11965"/>
        <dbReference type="ChEBI" id="CHEBI:15377"/>
        <dbReference type="ChEBI" id="CHEBI:15378"/>
        <dbReference type="ChEBI" id="CHEBI:15379"/>
        <dbReference type="ChEBI" id="CHEBI:16422"/>
        <dbReference type="ChEBI" id="CHEBI:57618"/>
        <dbReference type="ChEBI" id="CHEBI:58210"/>
        <dbReference type="ChEBI" id="CHEBI:87571"/>
    </reaction>
    <physiologicalReaction direction="left-to-right" evidence="20">
        <dbReference type="Rhea" id="RHEA:47257"/>
    </physiologicalReaction>
</comment>
<comment type="catalytic activity">
    <reaction evidence="8">
        <text>progesterone + reduced [NADPH--hemoprotein reductase] + O2 = 6beta-hydroxyprogesterone + oxidized [NADPH--hemoprotein reductase] + H2O + H(+)</text>
        <dbReference type="Rhea" id="RHEA:47252"/>
        <dbReference type="Rhea" id="RHEA-COMP:11964"/>
        <dbReference type="Rhea" id="RHEA-COMP:11965"/>
        <dbReference type="ChEBI" id="CHEBI:15377"/>
        <dbReference type="ChEBI" id="CHEBI:15378"/>
        <dbReference type="ChEBI" id="CHEBI:15379"/>
        <dbReference type="ChEBI" id="CHEBI:17026"/>
        <dbReference type="ChEBI" id="CHEBI:57618"/>
        <dbReference type="ChEBI" id="CHEBI:58210"/>
        <dbReference type="ChEBI" id="CHEBI:62117"/>
    </reaction>
    <physiologicalReaction direction="left-to-right" evidence="20">
        <dbReference type="Rhea" id="RHEA:47253"/>
    </physiologicalReaction>
</comment>
<comment type="catalytic activity">
    <reaction evidence="2">
        <text>all-trans-retinol + reduced [NADPH--hemoprotein reductase] + O2 = all-trans-retinal + oxidized [NADPH--hemoprotein reductase] + 2 H2O + H(+)</text>
        <dbReference type="Rhea" id="RHEA:42092"/>
        <dbReference type="Rhea" id="RHEA-COMP:11964"/>
        <dbReference type="Rhea" id="RHEA-COMP:11965"/>
        <dbReference type="ChEBI" id="CHEBI:15377"/>
        <dbReference type="ChEBI" id="CHEBI:15378"/>
        <dbReference type="ChEBI" id="CHEBI:15379"/>
        <dbReference type="ChEBI" id="CHEBI:17336"/>
        <dbReference type="ChEBI" id="CHEBI:17898"/>
        <dbReference type="ChEBI" id="CHEBI:57618"/>
        <dbReference type="ChEBI" id="CHEBI:58210"/>
    </reaction>
    <physiologicalReaction direction="left-to-right" evidence="16">
        <dbReference type="Rhea" id="RHEA:42093"/>
    </physiologicalReaction>
</comment>
<comment type="catalytic activity">
    <reaction evidence="3">
        <text>all-trans-retinoate + reduced [NADPH--hemoprotein reductase] + O2 = all-trans-4-hydroxyretinoate + oxidized [NADPH--hemoprotein reductase] + H2O + H(+)</text>
        <dbReference type="Rhea" id="RHEA:51984"/>
        <dbReference type="Rhea" id="RHEA-COMP:11964"/>
        <dbReference type="Rhea" id="RHEA-COMP:11965"/>
        <dbReference type="ChEBI" id="CHEBI:15377"/>
        <dbReference type="ChEBI" id="CHEBI:15378"/>
        <dbReference type="ChEBI" id="CHEBI:15379"/>
        <dbReference type="ChEBI" id="CHEBI:35291"/>
        <dbReference type="ChEBI" id="CHEBI:57618"/>
        <dbReference type="ChEBI" id="CHEBI:58210"/>
        <dbReference type="ChEBI" id="CHEBI:134178"/>
    </reaction>
    <physiologicalReaction direction="left-to-right" evidence="17">
        <dbReference type="Rhea" id="RHEA:51985"/>
    </physiologicalReaction>
</comment>
<comment type="cofactor">
    <cofactor evidence="1">
        <name>heme</name>
        <dbReference type="ChEBI" id="CHEBI:30413"/>
    </cofactor>
</comment>
<comment type="biophysicochemical properties">
    <kinetics>
        <KM evidence="5">52.47 uM for 17beta-estradiol (2-hydroxylation)</KM>
        <KM evidence="5">46.03 uM for 17beta-estradiol (4-hydroxylation)</KM>
        <KM evidence="5">15.04 uM for estrone (2-hydroxylation)</KM>
        <KM evidence="5">27.75 uM for estrone (4-hydroxylation)</KM>
        <KM evidence="3">44 uM for all-trans-retinoate (4-hydroxylation)</KM>
        <Vmax evidence="5">627.4 pmol/min/nmol enzyme toward 17beta-estradiol (2-hydroxylation)</Vmax>
        <Vmax evidence="5">297.8 pmol/min/nmol enzyme toward 17beta-estradiol (4-hydroxylation)</Vmax>
        <Vmax evidence="5">102.6 pmol/min/nmol enzyme toward estrone (2-hydroxylation)</Vmax>
        <Vmax evidence="5">156.3 pmol/min/nmol enzyme toward estrone (4-hydroxylation)</Vmax>
        <Vmax evidence="3">1124.0 pmol/min/nmol enzyme toward all-trans-retinoate (4-hydroxylation)</Vmax>
    </kinetics>
</comment>
<comment type="pathway">
    <text evidence="5">Steroid hormone biosynthesis.</text>
</comment>
<comment type="pathway">
    <text evidence="2">Cofactor metabolism; retinol metabolism.</text>
</comment>
<comment type="interaction">
    <interactant intactId="EBI-3908011">
        <id>P20815</id>
    </interactant>
    <interactant intactId="EBI-466029">
        <id>P42858</id>
        <label>HTT</label>
    </interactant>
    <organismsDiffer>false</organismsDiffer>
    <experiments>3</experiments>
</comment>
<comment type="subcellular location">
    <subcellularLocation>
        <location>Endoplasmic reticulum membrane</location>
        <topology>Peripheral membrane protein</topology>
    </subcellularLocation>
    <subcellularLocation>
        <location>Microsome membrane</location>
        <topology>Peripheral membrane protein</topology>
    </subcellularLocation>
</comment>
<comment type="alternative products">
    <event type="alternative splicing"/>
    <isoform>
        <id>P20815-1</id>
        <name>1</name>
        <sequence type="displayed"/>
    </isoform>
    <isoform>
        <id>P20815-2</id>
        <name>2</name>
        <sequence type="described" ref="VSP_042734 VSP_042735"/>
    </isoform>
</comment>
<comment type="induction">
    <text evidence="9">By glucocorticoids, such as dexamethesone.</text>
</comment>
<comment type="miscellaneous">
    <text evidence="18">Chimeric transcripts, characterized by CYP3A43 exon 1 joined at canonical splice sites to distinct sets of CYP3A5 exons, have been detected. All are possibly produced by trans-splicing. The chimeric transcripts exist in 2 different combinations: CYP3A43 exon 1 joined in frame to CYP3A5 exon 11-13 and CYP3A43 exon 1 joined in frame to CYP3A5 exon 12-13. All chimeric transcripts are expressed at very low levels in the liver (PubMed:11726664).</text>
</comment>
<comment type="similarity">
    <text evidence="15">Belongs to the cytochrome P450 family.</text>
</comment>
<comment type="online information" name="PharmVar Pharmacogen Variation Consortium">
    <link uri="https://www.pharmvar.org/gene/CYP3A5"/>
    <text>CYP3A5 alleles</text>
</comment>
<reference key="1">
    <citation type="journal article" date="1989" name="J. Biol. Chem.">
        <title>Cytochrome P-450 hPCN3, a novel cytochrome P-450 IIIA gene product that is differentially expressed in adult human liver. cDNA and deduced amino acid sequence and distinct specificities of cDNA-expressed hPCN1 and hPCN3 for the metabolism of steroid hormones and cyclosporine.</title>
        <authorList>
            <person name="Aoyama T."/>
            <person name="Yamano S."/>
            <person name="Waxman D.J."/>
            <person name="Lapenson D.P."/>
            <person name="Meyer U.A."/>
            <person name="Fischer V."/>
            <person name="Tyndale R."/>
            <person name="Inaba T."/>
            <person name="Kalow W."/>
            <person name="Gelboin H.V."/>
            <person name="Gonzalez F.J."/>
        </authorList>
    </citation>
    <scope>NUCLEOTIDE SEQUENCE [MRNA] (ISOFORM 1)</scope>
    <scope>CATALYTIC ACTIVITY</scope>
    <scope>FUNCTION</scope>
</reference>
<reference key="2">
    <citation type="journal article" date="1989" name="Arch. Biochem. Biophys.">
        <title>Characterization of a cDNA encoding a new member of the glucocorticoid-responsive cytochromes P450 in human liver.</title>
        <authorList>
            <person name="Schuetz J.D."/>
            <person name="Molowa D.T."/>
            <person name="Guzelian P.S."/>
        </authorList>
    </citation>
    <scope>NUCLEOTIDE SEQUENCE [MRNA] (ISOFORM 1)</scope>
    <scope>CHARACTERIZATION</scope>
    <source>
        <tissue>Liver</tissue>
    </source>
</reference>
<reference key="3">
    <citation type="journal article" date="2004" name="Nat. Genet.">
        <title>Complete sequencing and characterization of 21,243 full-length human cDNAs.</title>
        <authorList>
            <person name="Ota T."/>
            <person name="Suzuki Y."/>
            <person name="Nishikawa T."/>
            <person name="Otsuki T."/>
            <person name="Sugiyama T."/>
            <person name="Irie R."/>
            <person name="Wakamatsu A."/>
            <person name="Hayashi K."/>
            <person name="Sato H."/>
            <person name="Nagai K."/>
            <person name="Kimura K."/>
            <person name="Makita H."/>
            <person name="Sekine M."/>
            <person name="Obayashi M."/>
            <person name="Nishi T."/>
            <person name="Shibahara T."/>
            <person name="Tanaka T."/>
            <person name="Ishii S."/>
            <person name="Yamamoto J."/>
            <person name="Saito K."/>
            <person name="Kawai Y."/>
            <person name="Isono Y."/>
            <person name="Nakamura Y."/>
            <person name="Nagahari K."/>
            <person name="Murakami K."/>
            <person name="Yasuda T."/>
            <person name="Iwayanagi T."/>
            <person name="Wagatsuma M."/>
            <person name="Shiratori A."/>
            <person name="Sudo H."/>
            <person name="Hosoiri T."/>
            <person name="Kaku Y."/>
            <person name="Kodaira H."/>
            <person name="Kondo H."/>
            <person name="Sugawara M."/>
            <person name="Takahashi M."/>
            <person name="Kanda K."/>
            <person name="Yokoi T."/>
            <person name="Furuya T."/>
            <person name="Kikkawa E."/>
            <person name="Omura Y."/>
            <person name="Abe K."/>
            <person name="Kamihara K."/>
            <person name="Katsuta N."/>
            <person name="Sato K."/>
            <person name="Tanikawa M."/>
            <person name="Yamazaki M."/>
            <person name="Ninomiya K."/>
            <person name="Ishibashi T."/>
            <person name="Yamashita H."/>
            <person name="Murakawa K."/>
            <person name="Fujimori K."/>
            <person name="Tanai H."/>
            <person name="Kimata M."/>
            <person name="Watanabe M."/>
            <person name="Hiraoka S."/>
            <person name="Chiba Y."/>
            <person name="Ishida S."/>
            <person name="Ono Y."/>
            <person name="Takiguchi S."/>
            <person name="Watanabe S."/>
            <person name="Yosida M."/>
            <person name="Hotuta T."/>
            <person name="Kusano J."/>
            <person name="Kanehori K."/>
            <person name="Takahashi-Fujii A."/>
            <person name="Hara H."/>
            <person name="Tanase T.-O."/>
            <person name="Nomura Y."/>
            <person name="Togiya S."/>
            <person name="Komai F."/>
            <person name="Hara R."/>
            <person name="Takeuchi K."/>
            <person name="Arita M."/>
            <person name="Imose N."/>
            <person name="Musashino K."/>
            <person name="Yuuki H."/>
            <person name="Oshima A."/>
            <person name="Sasaki N."/>
            <person name="Aotsuka S."/>
            <person name="Yoshikawa Y."/>
            <person name="Matsunawa H."/>
            <person name="Ichihara T."/>
            <person name="Shiohata N."/>
            <person name="Sano S."/>
            <person name="Moriya S."/>
            <person name="Momiyama H."/>
            <person name="Satoh N."/>
            <person name="Takami S."/>
            <person name="Terashima Y."/>
            <person name="Suzuki O."/>
            <person name="Nakagawa S."/>
            <person name="Senoh A."/>
            <person name="Mizoguchi H."/>
            <person name="Goto Y."/>
            <person name="Shimizu F."/>
            <person name="Wakebe H."/>
            <person name="Hishigaki H."/>
            <person name="Watanabe T."/>
            <person name="Sugiyama A."/>
            <person name="Takemoto M."/>
            <person name="Kawakami B."/>
            <person name="Yamazaki M."/>
            <person name="Watanabe K."/>
            <person name="Kumagai A."/>
            <person name="Itakura S."/>
            <person name="Fukuzumi Y."/>
            <person name="Fujimori Y."/>
            <person name="Komiyama M."/>
            <person name="Tashiro H."/>
            <person name="Tanigami A."/>
            <person name="Fujiwara T."/>
            <person name="Ono T."/>
            <person name="Yamada K."/>
            <person name="Fujii Y."/>
            <person name="Ozaki K."/>
            <person name="Hirao M."/>
            <person name="Ohmori Y."/>
            <person name="Kawabata A."/>
            <person name="Hikiji T."/>
            <person name="Kobatake N."/>
            <person name="Inagaki H."/>
            <person name="Ikema Y."/>
            <person name="Okamoto S."/>
            <person name="Okitani R."/>
            <person name="Kawakami T."/>
            <person name="Noguchi S."/>
            <person name="Itoh T."/>
            <person name="Shigeta K."/>
            <person name="Senba T."/>
            <person name="Matsumura K."/>
            <person name="Nakajima Y."/>
            <person name="Mizuno T."/>
            <person name="Morinaga M."/>
            <person name="Sasaki M."/>
            <person name="Togashi T."/>
            <person name="Oyama M."/>
            <person name="Hata H."/>
            <person name="Watanabe M."/>
            <person name="Komatsu T."/>
            <person name="Mizushima-Sugano J."/>
            <person name="Satoh T."/>
            <person name="Shirai Y."/>
            <person name="Takahashi Y."/>
            <person name="Nakagawa K."/>
            <person name="Okumura K."/>
            <person name="Nagase T."/>
            <person name="Nomura N."/>
            <person name="Kikuchi H."/>
            <person name="Masuho Y."/>
            <person name="Yamashita R."/>
            <person name="Nakai K."/>
            <person name="Yada T."/>
            <person name="Nakamura Y."/>
            <person name="Ohara O."/>
            <person name="Isogai T."/>
            <person name="Sugano S."/>
        </authorList>
    </citation>
    <scope>NUCLEOTIDE SEQUENCE [LARGE SCALE MRNA] (ISOFORM 2)</scope>
</reference>
<reference key="4">
    <citation type="journal article" date="2003" name="Science">
        <title>Human chromosome 7: DNA sequence and biology.</title>
        <authorList>
            <person name="Scherer S.W."/>
            <person name="Cheung J."/>
            <person name="MacDonald J.R."/>
            <person name="Osborne L.R."/>
            <person name="Nakabayashi K."/>
            <person name="Herbrick J.-A."/>
            <person name="Carson A.R."/>
            <person name="Parker-Katiraee L."/>
            <person name="Skaug J."/>
            <person name="Khaja R."/>
            <person name="Zhang J."/>
            <person name="Hudek A.K."/>
            <person name="Li M."/>
            <person name="Haddad M."/>
            <person name="Duggan G.E."/>
            <person name="Fernandez B.A."/>
            <person name="Kanematsu E."/>
            <person name="Gentles S."/>
            <person name="Christopoulos C.C."/>
            <person name="Choufani S."/>
            <person name="Kwasnicka D."/>
            <person name="Zheng X.H."/>
            <person name="Lai Z."/>
            <person name="Nusskern D.R."/>
            <person name="Zhang Q."/>
            <person name="Gu Z."/>
            <person name="Lu F."/>
            <person name="Zeesman S."/>
            <person name="Nowaczyk M.J."/>
            <person name="Teshima I."/>
            <person name="Chitayat D."/>
            <person name="Shuman C."/>
            <person name="Weksberg R."/>
            <person name="Zackai E.H."/>
            <person name="Grebe T.A."/>
            <person name="Cox S.R."/>
            <person name="Kirkpatrick S.J."/>
            <person name="Rahman N."/>
            <person name="Friedman J.M."/>
            <person name="Heng H.H.Q."/>
            <person name="Pelicci P.G."/>
            <person name="Lo-Coco F."/>
            <person name="Belloni E."/>
            <person name="Shaffer L.G."/>
            <person name="Pober B."/>
            <person name="Morton C.C."/>
            <person name="Gusella J.F."/>
            <person name="Bruns G.A.P."/>
            <person name="Korf B.R."/>
            <person name="Quade B.J."/>
            <person name="Ligon A.H."/>
            <person name="Ferguson H."/>
            <person name="Higgins A.W."/>
            <person name="Leach N.T."/>
            <person name="Herrick S.R."/>
            <person name="Lemyre E."/>
            <person name="Farra C.G."/>
            <person name="Kim H.-G."/>
            <person name="Summers A.M."/>
            <person name="Gripp K.W."/>
            <person name="Roberts W."/>
            <person name="Szatmari P."/>
            <person name="Winsor E.J.T."/>
            <person name="Grzeschik K.-H."/>
            <person name="Teebi A."/>
            <person name="Minassian B.A."/>
            <person name="Kere J."/>
            <person name="Armengol L."/>
            <person name="Pujana M.A."/>
            <person name="Estivill X."/>
            <person name="Wilson M.D."/>
            <person name="Koop B.F."/>
            <person name="Tosi S."/>
            <person name="Moore G.E."/>
            <person name="Boright A.P."/>
            <person name="Zlotorynski E."/>
            <person name="Kerem B."/>
            <person name="Kroisel P.M."/>
            <person name="Petek E."/>
            <person name="Oscier D.G."/>
            <person name="Mould S.J."/>
            <person name="Doehner H."/>
            <person name="Doehner K."/>
            <person name="Rommens J.M."/>
            <person name="Vincent J.B."/>
            <person name="Venter J.C."/>
            <person name="Li P.W."/>
            <person name="Mural R.J."/>
            <person name="Adams M.D."/>
            <person name="Tsui L.-C."/>
        </authorList>
    </citation>
    <scope>NUCLEOTIDE SEQUENCE [LARGE SCALE GENOMIC DNA]</scope>
</reference>
<reference key="5">
    <citation type="submission" date="2005-09" db="EMBL/GenBank/DDBJ databases">
        <authorList>
            <person name="Mural R.J."/>
            <person name="Istrail S."/>
            <person name="Sutton G.G."/>
            <person name="Florea L."/>
            <person name="Halpern A.L."/>
            <person name="Mobarry C.M."/>
            <person name="Lippert R."/>
            <person name="Walenz B."/>
            <person name="Shatkay H."/>
            <person name="Dew I."/>
            <person name="Miller J.R."/>
            <person name="Flanigan M.J."/>
            <person name="Edwards N.J."/>
            <person name="Bolanos R."/>
            <person name="Fasulo D."/>
            <person name="Halldorsson B.V."/>
            <person name="Hannenhalli S."/>
            <person name="Turner R."/>
            <person name="Yooseph S."/>
            <person name="Lu F."/>
            <person name="Nusskern D.R."/>
            <person name="Shue B.C."/>
            <person name="Zheng X.H."/>
            <person name="Zhong F."/>
            <person name="Delcher A.L."/>
            <person name="Huson D.H."/>
            <person name="Kravitz S.A."/>
            <person name="Mouchard L."/>
            <person name="Reinert K."/>
            <person name="Remington K.A."/>
            <person name="Clark A.G."/>
            <person name="Waterman M.S."/>
            <person name="Eichler E.E."/>
            <person name="Adams M.D."/>
            <person name="Hunkapiller M.W."/>
            <person name="Myers E.W."/>
            <person name="Venter J.C."/>
        </authorList>
    </citation>
    <scope>NUCLEOTIDE SEQUENCE [LARGE SCALE GENOMIC DNA]</scope>
</reference>
<reference key="6">
    <citation type="journal article" date="2003" name="Nature">
        <title>The DNA sequence of human chromosome 7.</title>
        <authorList>
            <person name="Hillier L.W."/>
            <person name="Fulton R.S."/>
            <person name="Fulton L.A."/>
            <person name="Graves T.A."/>
            <person name="Pepin K.H."/>
            <person name="Wagner-McPherson C."/>
            <person name="Layman D."/>
            <person name="Maas J."/>
            <person name="Jaeger S."/>
            <person name="Walker R."/>
            <person name="Wylie K."/>
            <person name="Sekhon M."/>
            <person name="Becker M.C."/>
            <person name="O'Laughlin M.D."/>
            <person name="Schaller M.E."/>
            <person name="Fewell G.A."/>
            <person name="Delehaunty K.D."/>
            <person name="Miner T.L."/>
            <person name="Nash W.E."/>
            <person name="Cordes M."/>
            <person name="Du H."/>
            <person name="Sun H."/>
            <person name="Edwards J."/>
            <person name="Bradshaw-Cordum H."/>
            <person name="Ali J."/>
            <person name="Andrews S."/>
            <person name="Isak A."/>
            <person name="Vanbrunt A."/>
            <person name="Nguyen C."/>
            <person name="Du F."/>
            <person name="Lamar B."/>
            <person name="Courtney L."/>
            <person name="Kalicki J."/>
            <person name="Ozersky P."/>
            <person name="Bielicki L."/>
            <person name="Scott K."/>
            <person name="Holmes A."/>
            <person name="Harkins R."/>
            <person name="Harris A."/>
            <person name="Strong C.M."/>
            <person name="Hou S."/>
            <person name="Tomlinson C."/>
            <person name="Dauphin-Kohlberg S."/>
            <person name="Kozlowicz-Reilly A."/>
            <person name="Leonard S."/>
            <person name="Rohlfing T."/>
            <person name="Rock S.M."/>
            <person name="Tin-Wollam A.-M."/>
            <person name="Abbott A."/>
            <person name="Minx P."/>
            <person name="Maupin R."/>
            <person name="Strowmatt C."/>
            <person name="Latreille P."/>
            <person name="Miller N."/>
            <person name="Johnson D."/>
            <person name="Murray J."/>
            <person name="Woessner J.P."/>
            <person name="Wendl M.C."/>
            <person name="Yang S.-P."/>
            <person name="Schultz B.R."/>
            <person name="Wallis J.W."/>
            <person name="Spieth J."/>
            <person name="Bieri T.A."/>
            <person name="Nelson J.O."/>
            <person name="Berkowicz N."/>
            <person name="Wohldmann P.E."/>
            <person name="Cook L.L."/>
            <person name="Hickenbotham M.T."/>
            <person name="Eldred J."/>
            <person name="Williams D."/>
            <person name="Bedell J.A."/>
            <person name="Mardis E.R."/>
            <person name="Clifton S.W."/>
            <person name="Chissoe S.L."/>
            <person name="Marra M.A."/>
            <person name="Raymond C."/>
            <person name="Haugen E."/>
            <person name="Gillett W."/>
            <person name="Zhou Y."/>
            <person name="James R."/>
            <person name="Phelps K."/>
            <person name="Iadanoto S."/>
            <person name="Bubb K."/>
            <person name="Simms E."/>
            <person name="Levy R."/>
            <person name="Clendenning J."/>
            <person name="Kaul R."/>
            <person name="Kent W.J."/>
            <person name="Furey T.S."/>
            <person name="Baertsch R.A."/>
            <person name="Brent M.R."/>
            <person name="Keibler E."/>
            <person name="Flicek P."/>
            <person name="Bork P."/>
            <person name="Suyama M."/>
            <person name="Bailey J.A."/>
            <person name="Portnoy M.E."/>
            <person name="Torrents D."/>
            <person name="Chinwalla A.T."/>
            <person name="Gish W.R."/>
            <person name="Eddy S.R."/>
            <person name="McPherson J.D."/>
            <person name="Olson M.V."/>
            <person name="Eichler E.E."/>
            <person name="Green E.D."/>
            <person name="Waterston R.H."/>
            <person name="Wilson R.K."/>
        </authorList>
    </citation>
    <scope>NUCLEOTIDE SEQUENCE [LARGE SCALE GENOMIC DNA]</scope>
</reference>
<reference key="7">
    <citation type="journal article" date="2004" name="Genome Res.">
        <title>The status, quality, and expansion of the NIH full-length cDNA project: the Mammalian Gene Collection (MGC).</title>
        <authorList>
            <consortium name="The MGC Project Team"/>
        </authorList>
    </citation>
    <scope>NUCLEOTIDE SEQUENCE [LARGE SCALE MRNA] (ISOFORM 1)</scope>
    <source>
        <tissue>Colon</tissue>
    </source>
</reference>
<reference key="8">
    <citation type="journal article" date="2001" name="Pharmacogenetics">
        <title>Genomic organization of the human CYP3A locus: identification of a new, inducible CYP3A gene.</title>
        <authorList>
            <person name="Gellner K."/>
            <person name="Eiselt R."/>
            <person name="Hustert E."/>
            <person name="Arnold H."/>
            <person name="Koch I."/>
            <person name="Haberl M."/>
            <person name="Deglmann C.J."/>
            <person name="Burk O."/>
            <person name="Buntefuss D."/>
            <person name="Escher S."/>
            <person name="Bishop C."/>
            <person name="Koebe H.-G."/>
            <person name="Brinkmann U."/>
            <person name="Klenk H.-P."/>
            <person name="Kleine K."/>
            <person name="Meyer U.A."/>
            <person name="Wojnowski L."/>
        </authorList>
    </citation>
    <scope>NUCLEOTIDE SEQUENCE [GENOMIC DNA] OF 1-106</scope>
</reference>
<reference key="9">
    <citation type="journal article" date="1996" name="Mol. Pharmacol.">
        <title>Identification of a novel dexamethasone responsive enhancer in the human CYP3A5 gene and its activation in human and rat liver cells.</title>
        <authorList>
            <person name="Schuetz J.D."/>
            <person name="Schuetz E.G."/>
            <person name="Thottassery J.V."/>
            <person name="Guzelian P.S."/>
            <person name="Strom S."/>
            <person name="Sun D."/>
        </authorList>
    </citation>
    <scope>NUCLEOTIDE SEQUENCE [GENOMIC DNA] OF 1-24</scope>
    <scope>INDUCTION BY DEXAMETHASONE</scope>
</reference>
<reference key="10">
    <citation type="journal article" date="1994" name="Biochem. Biophys. Res. Commun.">
        <title>Sequence of the 5'-flanking region of CYP3A5: comparative analysis with CYP3A4 and CYP3A7.</title>
        <authorList>
            <person name="Jounaidi Y."/>
            <person name="Guzelian P.S."/>
            <person name="Maurel P."/>
            <person name="Vilarem M.J."/>
        </authorList>
    </citation>
    <scope>NUCLEOTIDE SEQUENCE [GENOMIC DNA] OF 1-24</scope>
</reference>
<reference key="11">
    <citation type="journal article" date="2000" name="Drug Metab. Dispos.">
        <title>Biosynthesis of all-trans-retinoic acid from all-trans-retinol: catalysis of all-trans-retinol oxidation by human P-450 cytochromes.</title>
        <authorList>
            <person name="Chen H."/>
            <person name="Howald W.N."/>
            <person name="Juchau M.R."/>
        </authorList>
    </citation>
    <scope>FUNCTION</scope>
    <scope>CATALYTIC ACTIVITY</scope>
    <scope>PATHWAY</scope>
</reference>
<reference key="12">
    <citation type="journal article" date="2000" name="Mol. Pharmacol.">
        <title>Identification of human cytochrome P450s involved in the formation of all-trans-retinoic acid principal metabolites.</title>
        <authorList>
            <person name="Marill J."/>
            <person name="Cresteil T."/>
            <person name="Lanotte M."/>
            <person name="Chabot G.G."/>
        </authorList>
    </citation>
    <scope>FUNCTION</scope>
    <scope>CATALYTIC ACTIVITY</scope>
    <scope>BIOPHYSICOCHEMICAL PROPERTIES</scope>
</reference>
<reference key="13">
    <citation type="journal article" date="2002" name="J. Biol. Chem.">
        <title>Intergenic mRNA molecules resulting from trans-splicing.</title>
        <authorList>
            <person name="Finta C."/>
            <person name="Zaphiropoulos P.G."/>
        </authorList>
    </citation>
    <scope>TRANS-SPLICING</scope>
</reference>
<reference key="14">
    <citation type="journal article" date="2003" name="Endocrinology">
        <title>Characterization of the oxidative metabolites of 17beta-estradiol and estrone formed by 15 selectively expressed human cytochrome p450 isoforms.</title>
        <authorList>
            <person name="Lee A.J."/>
            <person name="Cai M.X."/>
            <person name="Thomas P.E."/>
            <person name="Conney A.H."/>
            <person name="Zhu B.T."/>
        </authorList>
    </citation>
    <scope>FUNCTION</scope>
    <scope>CATALYTIC ACTIVITY</scope>
    <scope>BIOPHYSICOCHEMICAL PROPERTIES</scope>
    <scope>PATHWAY</scope>
</reference>
<reference key="15">
    <citation type="journal article" date="2014" name="J. Proteomics">
        <title>An enzyme assisted RP-RPLC approach for in-depth analysis of human liver phosphoproteome.</title>
        <authorList>
            <person name="Bian Y."/>
            <person name="Song C."/>
            <person name="Cheng K."/>
            <person name="Dong M."/>
            <person name="Wang F."/>
            <person name="Huang J."/>
            <person name="Sun D."/>
            <person name="Wang L."/>
            <person name="Ye M."/>
            <person name="Zou H."/>
        </authorList>
    </citation>
    <scope>IDENTIFICATION BY MASS SPECTROMETRY [LARGE SCALE ANALYSIS]</scope>
    <source>
        <tissue>Liver</tissue>
    </source>
</reference>
<reference key="16">
    <citation type="journal article" date="1996" name="Biochem. Biophys. Res. Commun.">
        <title>Detection of CYP3A5 allelic variant: a candidate for the polymorphic expression of the protein?</title>
        <authorList>
            <person name="Jounaidi Y."/>
            <person name="Hyrailles V."/>
            <person name="Gervot L."/>
            <person name="Maurel P."/>
        </authorList>
    </citation>
    <scope>VARIANT CYP3A5*2 ASN-398</scope>
</reference>
<reference key="17">
    <citation type="journal article" date="2001" name="Drug Metab. Dispos.">
        <title>Genetic polymorphism of cytochrome P450 3A5 in Chinese.</title>
        <authorList>
            <person name="Chou F.C."/>
            <person name="Tzeng S.J."/>
            <person name="Huang J.D."/>
        </authorList>
    </citation>
    <scope>VARIANT CYP3A5*4 ARG-200</scope>
</reference>
<reference key="18">
    <citation type="journal article" date="2003" name="Pharmacogenetics">
        <title>Genetic findings and functional studies of human CYP3A5 single nucleotide polymorphisms in different ethnic groups.</title>
        <authorList>
            <person name="Lee S.J."/>
            <person name="Usmani K.A."/>
            <person name="Chanas B."/>
            <person name="Ghanayem B."/>
            <person name="Xi T."/>
            <person name="Hodgson E."/>
            <person name="Mohrenweiser H.W."/>
            <person name="Goldstein J.A."/>
        </authorList>
    </citation>
    <scope>VARIANTS CYS-28; THR-337 AND SER-446</scope>
</reference>
<reference key="19">
    <citation type="journal article" date="2004" name="Pharmacogenomics">
        <title>Genetic variation in eleven phase I drug metabolism genes in an ethnically diverse population.</title>
        <authorList>
            <person name="Solus J.F."/>
            <person name="Arietta B.J."/>
            <person name="Harris J.R."/>
            <person name="Sexton D.P."/>
            <person name="Steward J.Q."/>
            <person name="McMunn C."/>
            <person name="Ihrie P."/>
            <person name="Mehall J.M."/>
            <person name="Edwards T.L."/>
            <person name="Dawson E.P."/>
        </authorList>
    </citation>
    <scope>VARIANTS TYR-30; GLU-277; THR-337 AND ASN-398</scope>
</reference>
<evidence type="ECO:0000250" key="1"/>
<evidence type="ECO:0000269" key="2">
    <source>
    </source>
</evidence>
<evidence type="ECO:0000269" key="3">
    <source>
    </source>
</evidence>
<evidence type="ECO:0000269" key="4">
    <source>
    </source>
</evidence>
<evidence type="ECO:0000269" key="5">
    <source>
    </source>
</evidence>
<evidence type="ECO:0000269" key="6">
    <source>
    </source>
</evidence>
<evidence type="ECO:0000269" key="7">
    <source>
    </source>
</evidence>
<evidence type="ECO:0000269" key="8">
    <source>
    </source>
</evidence>
<evidence type="ECO:0000269" key="9">
    <source>
    </source>
</evidence>
<evidence type="ECO:0000269" key="10">
    <source>
    </source>
</evidence>
<evidence type="ECO:0000303" key="11">
    <source>
    </source>
</evidence>
<evidence type="ECO:0000303" key="12">
    <source>
    </source>
</evidence>
<evidence type="ECO:0000303" key="13">
    <source>
    </source>
</evidence>
<evidence type="ECO:0000303" key="14">
    <source>
    </source>
</evidence>
<evidence type="ECO:0000305" key="15"/>
<evidence type="ECO:0000305" key="16">
    <source>
    </source>
</evidence>
<evidence type="ECO:0000305" key="17">
    <source>
    </source>
</evidence>
<evidence type="ECO:0000305" key="18">
    <source>
    </source>
</evidence>
<evidence type="ECO:0000305" key="19">
    <source>
    </source>
</evidence>
<evidence type="ECO:0000305" key="20">
    <source>
    </source>
</evidence>
<evidence type="ECO:0000312" key="21">
    <source>
        <dbReference type="HGNC" id="HGNC:2638"/>
    </source>
</evidence>
<evidence type="ECO:0007829" key="22">
    <source>
        <dbReference type="PDB" id="5VEU"/>
    </source>
</evidence>
<sequence length="502" mass="57109">MDLIPNLAVETWLLLAVSLVLLYLYGTRTHGLFKRLGIPGPTPLPLLGNVLSYRQGLWKFDTECYKKYGKMWGTYEGQLPVLAITDPDVIRTVLVKECYSVFTNRRSLGPVGFMKSAISLAEDEEWKRIRSLLSPTFTSGKLKEMFPIIAQYGDVLVRNLRREAEKGKPVTLKDIFGAYSMDVITGTSFGVNIDSLNNPQDPFVESTKKFLKFGFLDPLFLSIILFPFLTPVFEALNVSLFPKDTINFLSKSVNRMKKSRLNDKQKHRLDFLQLMIDSQNSKETESHKALSDLELAAQSIIFIFAGYETTSSVLSFTLYELATHPDVQQKLQKEIDAVLPNKAPPTYDAVVQMEYLDMVVNETLRLFPVAIRLERTCKKDVEINGVFIPKGSMVVIPTYALHHDPKYWTEPEEFRPERFSKKKDSIDPYIYTPFGTGPRNCIGMRFALMNMKLALIRVLQNFSFKPCKETQIPLKLDTQGLLQPEKPIVLKVDSRDGTLSGE</sequence>
<feature type="chain" id="PRO_0000051787" description="Cytochrome P450 3A5">
    <location>
        <begin position="1"/>
        <end position="502"/>
    </location>
</feature>
<feature type="binding site" description="axial binding residue">
    <location>
        <position position="441"/>
    </location>
    <ligand>
        <name>heme</name>
        <dbReference type="ChEBI" id="CHEBI:30413"/>
    </ligand>
    <ligandPart>
        <name>Fe</name>
        <dbReference type="ChEBI" id="CHEBI:18248"/>
    </ligandPart>
</feature>
<feature type="splice variant" id="VSP_042734" description="In isoform 2." evidence="12">
    <original>SLGPVGFMKSAISLAEDEEWKRIRSLLSPTFTSG</original>
    <variation>ICATTSTIKMQTHSVTMWLPPAVLQSQHGVCLFL</variation>
    <location>
        <begin position="107"/>
        <end position="140"/>
    </location>
</feature>
<feature type="splice variant" id="VSP_042735" description="In isoform 2." evidence="12">
    <location>
        <begin position="141"/>
        <end position="502"/>
    </location>
</feature>
<feature type="sequence variant" id="VAR_024731" description="In allele CYP3A5*8; dbSNP:rs55817950." evidence="6">
    <original>R</original>
    <variation>C</variation>
    <location>
        <position position="28"/>
    </location>
</feature>
<feature type="sequence variant" id="VAR_024728" description="In dbSNP:rs28383468." evidence="7">
    <original>H</original>
    <variation>Y</variation>
    <location>
        <position position="30"/>
    </location>
</feature>
<feature type="sequence variant" id="VAR_024732" description="In allele CYP3A5*4; dbSNP:rs56411402." evidence="4">
    <original>Q</original>
    <variation>R</variation>
    <location>
        <position position="200"/>
    </location>
</feature>
<feature type="sequence variant" id="VAR_024729" description="In dbSNP:rs28383477." evidence="7">
    <original>D</original>
    <variation>E</variation>
    <location>
        <position position="277"/>
    </location>
</feature>
<feature type="sequence variant" id="VAR_024730" description="In allele CYP3A5*9; dbSNP:rs28383479." evidence="6 7">
    <original>A</original>
    <variation>T</variation>
    <location>
        <position position="337"/>
    </location>
</feature>
<feature type="sequence variant" id="VAR_029161" description="In dbSNP:rs28365092.">
    <original>I</original>
    <variation>V</variation>
    <location>
        <position position="371"/>
    </location>
</feature>
<feature type="sequence variant" id="VAR_008365" description="In allele CYP3A5*2; dbSNP:rs28365083." evidence="7 10">
    <original>T</original>
    <variation>N</variation>
    <location>
        <position position="398"/>
    </location>
</feature>
<feature type="sequence variant" id="VAR_024733" description="In dbSNP:rs41279854." evidence="6">
    <original>F</original>
    <variation>S</variation>
    <location>
        <position position="446"/>
    </location>
</feature>
<feature type="sequence variant" id="VAR_029162" description="In dbSNP:rs28365085.">
    <original>I</original>
    <variation>T</variation>
    <location>
        <position position="488"/>
    </location>
</feature>
<feature type="sequence conflict" description="In Ref. 2; no nucleotide entry." evidence="15" ref="2">
    <original>A</original>
    <variation>P</variation>
    <location>
        <position position="305"/>
    </location>
</feature>
<feature type="sequence conflict" description="In Ref. 2; no nucleotide entry." evidence="15" ref="2">
    <original>L</original>
    <variation>F</variation>
    <location>
        <position position="318"/>
    </location>
</feature>
<feature type="sequence conflict" description="In Ref. 2; no nucleotide entry." evidence="15" ref="2">
    <original>H</original>
    <variation>D</variation>
    <location>
        <position position="324"/>
    </location>
</feature>
<feature type="sequence conflict" description="In Ref. 2; no nucleotide entry." evidence="15" ref="2">
    <original>C</original>
    <variation>G</variation>
    <location>
        <position position="377"/>
    </location>
</feature>
<feature type="helix" evidence="22">
    <location>
        <begin position="32"/>
        <end position="35"/>
    </location>
</feature>
<feature type="turn" evidence="22">
    <location>
        <begin position="45"/>
        <end position="47"/>
    </location>
</feature>
<feature type="helix" evidence="22">
    <location>
        <begin position="50"/>
        <end position="55"/>
    </location>
</feature>
<feature type="helix" evidence="22">
    <location>
        <begin position="57"/>
        <end position="67"/>
    </location>
</feature>
<feature type="strand" evidence="22">
    <location>
        <begin position="70"/>
        <end position="76"/>
    </location>
</feature>
<feature type="strand" evidence="22">
    <location>
        <begin position="79"/>
        <end position="84"/>
    </location>
</feature>
<feature type="helix" evidence="22">
    <location>
        <begin position="87"/>
        <end position="94"/>
    </location>
</feature>
<feature type="turn" evidence="22">
    <location>
        <begin position="95"/>
        <end position="101"/>
    </location>
</feature>
<feature type="helix" evidence="22">
    <location>
        <begin position="112"/>
        <end position="116"/>
    </location>
</feature>
<feature type="turn" evidence="22">
    <location>
        <begin position="118"/>
        <end position="120"/>
    </location>
</feature>
<feature type="helix" evidence="22">
    <location>
        <begin position="123"/>
        <end position="133"/>
    </location>
</feature>
<feature type="helix" evidence="22">
    <location>
        <begin position="134"/>
        <end position="137"/>
    </location>
</feature>
<feature type="helix" evidence="22">
    <location>
        <begin position="139"/>
        <end position="166"/>
    </location>
</feature>
<feature type="helix" evidence="22">
    <location>
        <begin position="172"/>
        <end position="189"/>
    </location>
</feature>
<feature type="helix" evidence="22">
    <location>
        <begin position="202"/>
        <end position="207"/>
    </location>
</feature>
<feature type="helix" evidence="22">
    <location>
        <begin position="208"/>
        <end position="211"/>
    </location>
</feature>
<feature type="helix" evidence="22">
    <location>
        <begin position="218"/>
        <end position="225"/>
    </location>
</feature>
<feature type="helix" evidence="22">
    <location>
        <begin position="229"/>
        <end position="235"/>
    </location>
</feature>
<feature type="helix" evidence="22">
    <location>
        <begin position="243"/>
        <end position="262"/>
    </location>
</feature>
<feature type="strand" evidence="22">
    <location>
        <begin position="264"/>
        <end position="266"/>
    </location>
</feature>
<feature type="helix" evidence="22">
    <location>
        <begin position="271"/>
        <end position="276"/>
    </location>
</feature>
<feature type="helix" evidence="22">
    <location>
        <begin position="277"/>
        <end position="280"/>
    </location>
</feature>
<feature type="strand" evidence="22">
    <location>
        <begin position="285"/>
        <end position="287"/>
    </location>
</feature>
<feature type="helix" evidence="22">
    <location>
        <begin position="292"/>
        <end position="323"/>
    </location>
</feature>
<feature type="helix" evidence="22">
    <location>
        <begin position="325"/>
        <end position="338"/>
    </location>
</feature>
<feature type="helix" evidence="22">
    <location>
        <begin position="340"/>
        <end position="342"/>
    </location>
</feature>
<feature type="helix" evidence="22">
    <location>
        <begin position="347"/>
        <end position="352"/>
    </location>
</feature>
<feature type="helix" evidence="22">
    <location>
        <begin position="354"/>
        <end position="366"/>
    </location>
</feature>
<feature type="strand" evidence="22">
    <location>
        <begin position="369"/>
        <end position="376"/>
    </location>
</feature>
<feature type="strand" evidence="22">
    <location>
        <begin position="381"/>
        <end position="388"/>
    </location>
</feature>
<feature type="strand" evidence="22">
    <location>
        <begin position="393"/>
        <end position="396"/>
    </location>
</feature>
<feature type="helix" evidence="22">
    <location>
        <begin position="398"/>
        <end position="402"/>
    </location>
</feature>
<feature type="turn" evidence="22">
    <location>
        <begin position="405"/>
        <end position="407"/>
    </location>
</feature>
<feature type="strand" evidence="22">
    <location>
        <begin position="408"/>
        <end position="410"/>
    </location>
</feature>
<feature type="helix" evidence="22">
    <location>
        <begin position="416"/>
        <end position="418"/>
    </location>
</feature>
<feature type="strand" evidence="22">
    <location>
        <begin position="424"/>
        <end position="426"/>
    </location>
</feature>
<feature type="turn" evidence="22">
    <location>
        <begin position="428"/>
        <end position="430"/>
    </location>
</feature>
<feature type="helix" evidence="22">
    <location>
        <begin position="444"/>
        <end position="459"/>
    </location>
</feature>
<feature type="strand" evidence="22">
    <location>
        <begin position="462"/>
        <end position="465"/>
    </location>
</feature>
<feature type="strand" evidence="22">
    <location>
        <begin position="478"/>
        <end position="481"/>
    </location>
</feature>
<feature type="strand" evidence="22">
    <location>
        <begin position="484"/>
        <end position="486"/>
    </location>
</feature>
<feature type="strand" evidence="22">
    <location>
        <begin position="489"/>
        <end position="494"/>
    </location>
</feature>
<proteinExistence type="evidence at protein level"/>
<protein>
    <recommendedName>
        <fullName evidence="11">Cytochrome P450 3A5</fullName>
        <ecNumber evidence="3 5 8">1.14.14.1</ecNumber>
    </recommendedName>
    <alternativeName>
        <fullName>CYPIIIA5</fullName>
    </alternativeName>
    <alternativeName>
        <fullName evidence="13">Cytochrome P450-PCN3</fullName>
    </alternativeName>
</protein>
<name>CP3A5_HUMAN</name>